<evidence type="ECO:0000250" key="1"/>
<evidence type="ECO:0000250" key="2">
    <source>
        <dbReference type="UniProtKB" id="D0E0C2"/>
    </source>
</evidence>
<evidence type="ECO:0000250" key="3">
    <source>
        <dbReference type="UniProtKB" id="O88420"/>
    </source>
</evidence>
<evidence type="ECO:0000250" key="4">
    <source>
        <dbReference type="UniProtKB" id="P04775"/>
    </source>
</evidence>
<evidence type="ECO:0000250" key="5">
    <source>
        <dbReference type="UniProtKB" id="Q15858"/>
    </source>
</evidence>
<evidence type="ECO:0000250" key="6">
    <source>
        <dbReference type="UniProtKB" id="Q9WTU3"/>
    </source>
</evidence>
<evidence type="ECO:0000255" key="7"/>
<evidence type="ECO:0000255" key="8">
    <source>
        <dbReference type="PROSITE-ProRule" id="PRU00116"/>
    </source>
</evidence>
<evidence type="ECO:0000256" key="9">
    <source>
        <dbReference type="SAM" id="MobiDB-lite"/>
    </source>
</evidence>
<evidence type="ECO:0000269" key="10">
    <source>
    </source>
</evidence>
<evidence type="ECO:0000269" key="11">
    <source>
    </source>
</evidence>
<evidence type="ECO:0000269" key="12">
    <source>
    </source>
</evidence>
<evidence type="ECO:0000269" key="13">
    <source>
    </source>
</evidence>
<evidence type="ECO:0000269" key="14">
    <source>
    </source>
</evidence>
<evidence type="ECO:0000269" key="15">
    <source>
    </source>
</evidence>
<evidence type="ECO:0000269" key="16">
    <source>
    </source>
</evidence>
<evidence type="ECO:0000269" key="17">
    <source>
    </source>
</evidence>
<evidence type="ECO:0000269" key="18">
    <source>
    </source>
</evidence>
<evidence type="ECO:0000269" key="19">
    <source>
    </source>
</evidence>
<evidence type="ECO:0000269" key="20">
    <source>
    </source>
</evidence>
<evidence type="ECO:0000269" key="21">
    <source>
    </source>
</evidence>
<evidence type="ECO:0000269" key="22">
    <source>
    </source>
</evidence>
<evidence type="ECO:0000269" key="23">
    <source>
    </source>
</evidence>
<evidence type="ECO:0000269" key="24">
    <source>
    </source>
</evidence>
<evidence type="ECO:0000269" key="25">
    <source>
    </source>
</evidence>
<evidence type="ECO:0000269" key="26">
    <source>
    </source>
</evidence>
<evidence type="ECO:0000269" key="27">
    <source>
    </source>
</evidence>
<evidence type="ECO:0000269" key="28">
    <source>
    </source>
</evidence>
<evidence type="ECO:0000269" key="29">
    <source>
    </source>
</evidence>
<evidence type="ECO:0000269" key="30">
    <source>
    </source>
</evidence>
<evidence type="ECO:0000269" key="31">
    <source>
    </source>
</evidence>
<evidence type="ECO:0000269" key="32">
    <source>
    </source>
</evidence>
<evidence type="ECO:0000269" key="33">
    <source>
    </source>
</evidence>
<evidence type="ECO:0000269" key="34">
    <source>
    </source>
</evidence>
<evidence type="ECO:0000269" key="35">
    <source>
    </source>
</evidence>
<evidence type="ECO:0000269" key="36">
    <source>
    </source>
</evidence>
<evidence type="ECO:0000269" key="37">
    <source>
    </source>
</evidence>
<evidence type="ECO:0000303" key="38">
    <source>
    </source>
</evidence>
<evidence type="ECO:0000303" key="39">
    <source>
    </source>
</evidence>
<evidence type="ECO:0000303" key="40">
    <source>
    </source>
</evidence>
<evidence type="ECO:0000305" key="41"/>
<evidence type="ECO:0000305" key="42">
    <source>
    </source>
</evidence>
<evidence type="ECO:0000312" key="43">
    <source>
        <dbReference type="EMBL" id="BAA78033.1"/>
    </source>
</evidence>
<evidence type="ECO:0000312" key="44">
    <source>
        <dbReference type="HGNC" id="HGNC:10596"/>
    </source>
</evidence>
<evidence type="ECO:0000312" key="45">
    <source>
        <dbReference type="PDB" id="8FHD"/>
    </source>
</evidence>
<evidence type="ECO:0007744" key="46">
    <source>
        <dbReference type="PDB" id="8FHD"/>
    </source>
</evidence>
<evidence type="ECO:0007744" key="47">
    <source>
        <dbReference type="PDB" id="8GZ1"/>
    </source>
</evidence>
<evidence type="ECO:0007744" key="48">
    <source>
        <dbReference type="PDB" id="8GZ2"/>
    </source>
</evidence>
<evidence type="ECO:0007829" key="49">
    <source>
        <dbReference type="PDB" id="8FHD"/>
    </source>
</evidence>
<evidence type="ECO:0007829" key="50">
    <source>
        <dbReference type="PDB" id="8GZ1"/>
    </source>
</evidence>
<evidence type="ECO:0007829" key="51">
    <source>
        <dbReference type="PDB" id="8GZ2"/>
    </source>
</evidence>
<feature type="chain" id="PRO_0000048500" description="Sodium channel protein type 8 subunit alpha">
    <location>
        <begin position="1"/>
        <end position="1980"/>
    </location>
</feature>
<feature type="topological domain" description="Cytoplasmic" evidence="41">
    <location>
        <begin position="1"/>
        <end position="132"/>
    </location>
</feature>
<feature type="transmembrane region" description="Helical; Name=S1 of repeat I" evidence="2">
    <location>
        <begin position="133"/>
        <end position="151"/>
    </location>
</feature>
<feature type="topological domain" description="Extracellular" evidence="41">
    <location>
        <begin position="152"/>
        <end position="158"/>
    </location>
</feature>
<feature type="transmembrane region" description="Helical; Name=S2 of repeat I" evidence="2">
    <location>
        <begin position="159"/>
        <end position="179"/>
    </location>
</feature>
<feature type="topological domain" description="Cytoplasmic" evidence="41">
    <location>
        <begin position="180"/>
        <end position="193"/>
    </location>
</feature>
<feature type="transmembrane region" description="Helical; Name=S3 of repeat I" evidence="2">
    <location>
        <begin position="194"/>
        <end position="211"/>
    </location>
</feature>
<feature type="topological domain" description="Extracellular" evidence="41">
    <location>
        <begin position="212"/>
        <end position="217"/>
    </location>
</feature>
<feature type="transmembrane region" description="Helical; Name=S4 of repeat I" evidence="2">
    <location>
        <begin position="218"/>
        <end position="234"/>
    </location>
</feature>
<feature type="topological domain" description="Cytoplasmic" evidence="41">
    <location>
        <begin position="235"/>
        <end position="253"/>
    </location>
</feature>
<feature type="transmembrane region" description="Helical; Name=S5 of repeat I" evidence="2">
    <location>
        <begin position="254"/>
        <end position="273"/>
    </location>
</feature>
<feature type="topological domain" description="Extracellular" evidence="41">
    <location>
        <begin position="274"/>
        <end position="355"/>
    </location>
</feature>
<feature type="intramembrane region" description="Pore-forming" evidence="2">
    <location>
        <begin position="356"/>
        <end position="380"/>
    </location>
</feature>
<feature type="topological domain" description="Extracellular" evidence="41">
    <location>
        <begin position="381"/>
        <end position="387"/>
    </location>
</feature>
<feature type="transmembrane region" description="Helical; Name=S6 of repeat I" evidence="2">
    <location>
        <begin position="388"/>
        <end position="408"/>
    </location>
</feature>
<feature type="topological domain" description="Cytoplasmic" evidence="41">
    <location>
        <begin position="409"/>
        <end position="753"/>
    </location>
</feature>
<feature type="transmembrane region" description="Helical; Name=S1 of repeat II" evidence="2">
    <location>
        <begin position="754"/>
        <end position="772"/>
    </location>
</feature>
<feature type="topological domain" description="Extracellular" evidence="41">
    <location>
        <begin position="773"/>
        <end position="783"/>
    </location>
</feature>
<feature type="transmembrane region" description="Helical; Name=S2 of repeat II" evidence="2">
    <location>
        <begin position="784"/>
        <end position="803"/>
    </location>
</feature>
<feature type="topological domain" description="Cytoplasmic" evidence="41">
    <location>
        <begin position="804"/>
        <end position="817"/>
    </location>
</feature>
<feature type="transmembrane region" description="Helical; Name=S3 of repeat II" evidence="2">
    <location>
        <begin position="818"/>
        <end position="837"/>
    </location>
</feature>
<feature type="topological domain" description="Extracellular" evidence="41">
    <location>
        <begin position="838"/>
        <end position="839"/>
    </location>
</feature>
<feature type="transmembrane region" description="Helical; Name=S4 of repeat II" evidence="2">
    <location>
        <begin position="840"/>
        <end position="857"/>
    </location>
</feature>
<feature type="topological domain" description="Cytoplasmic" evidence="41">
    <location>
        <begin position="858"/>
        <end position="873"/>
    </location>
</feature>
<feature type="transmembrane region" description="Helical; Name=S5 of repeat II" evidence="2">
    <location>
        <begin position="874"/>
        <end position="892"/>
    </location>
</feature>
<feature type="topological domain" description="Extracellular" evidence="41">
    <location>
        <begin position="893"/>
        <end position="921"/>
    </location>
</feature>
<feature type="intramembrane region" description="Pore-forming" evidence="2">
    <location>
        <begin position="922"/>
        <end position="942"/>
    </location>
</feature>
<feature type="topological domain" description="Extracellular" evidence="41">
    <location>
        <begin position="943"/>
        <end position="955"/>
    </location>
</feature>
<feature type="transmembrane region" description="Helical; Name=S6 of repeat II" evidence="2">
    <location>
        <begin position="956"/>
        <end position="976"/>
    </location>
</feature>
<feature type="topological domain" description="Cytoplasmic" evidence="41">
    <location>
        <begin position="977"/>
        <end position="1199"/>
    </location>
</feature>
<feature type="transmembrane region" description="Helical; Name=S1 of repeat III" evidence="2">
    <location>
        <begin position="1200"/>
        <end position="1217"/>
    </location>
</feature>
<feature type="topological domain" description="Extracellular" evidence="41">
    <location>
        <begin position="1218"/>
        <end position="1230"/>
    </location>
</feature>
<feature type="transmembrane region" description="Helical; Name=S2 of repeat III" evidence="2">
    <location>
        <begin position="1231"/>
        <end position="1249"/>
    </location>
</feature>
<feature type="topological domain" description="Cytoplasmic" evidence="41">
    <location>
        <begin position="1250"/>
        <end position="1263"/>
    </location>
</feature>
<feature type="transmembrane region" description="Helical; Name=S3 of repeat III" evidence="2">
    <location>
        <begin position="1264"/>
        <end position="1282"/>
    </location>
</feature>
<feature type="topological domain" description="Extracellular" evidence="41">
    <location>
        <begin position="1283"/>
        <end position="1290"/>
    </location>
</feature>
<feature type="transmembrane region" description="Helical; Name=S4 of repeat III" evidence="2">
    <location>
        <begin position="1291"/>
        <end position="1309"/>
    </location>
</feature>
<feature type="topological domain" description="Cytoplasmic" evidence="41">
    <location>
        <begin position="1310"/>
        <end position="1326"/>
    </location>
</feature>
<feature type="transmembrane region" description="Helical; Name=S5 of repeat III" evidence="2">
    <location>
        <begin position="1327"/>
        <end position="1346"/>
    </location>
</feature>
<feature type="topological domain" description="Extracellular" evidence="41">
    <location>
        <begin position="1347"/>
        <end position="1399"/>
    </location>
</feature>
<feature type="intramembrane region" description="Pore-forming" evidence="2">
    <location>
        <begin position="1400"/>
        <end position="1421"/>
    </location>
</feature>
<feature type="topological domain" description="Extracellular" evidence="41">
    <location>
        <begin position="1422"/>
        <end position="1438"/>
    </location>
</feature>
<feature type="transmembrane region" description="Helical; Name=S6 of repeat III" evidence="2">
    <location>
        <begin position="1439"/>
        <end position="1460"/>
    </location>
</feature>
<feature type="topological domain" description="Cytoplasmic" evidence="41">
    <location>
        <begin position="1461"/>
        <end position="1523"/>
    </location>
</feature>
<feature type="transmembrane region" description="Helical; Name=S1 of repeat IV" evidence="2">
    <location>
        <begin position="1524"/>
        <end position="1541"/>
    </location>
</feature>
<feature type="topological domain" description="Extracellular" evidence="41">
    <location>
        <begin position="1542"/>
        <end position="1552"/>
    </location>
</feature>
<feature type="transmembrane region" description="Helical; Name=S2 of repeat IV" evidence="2">
    <location>
        <begin position="1553"/>
        <end position="1571"/>
    </location>
</feature>
<feature type="topological domain" description="Cytoplasmic" evidence="41">
    <location>
        <begin position="1572"/>
        <end position="1583"/>
    </location>
</feature>
<feature type="transmembrane region" description="Helical; Name=S3 of repeat IV" evidence="2">
    <location>
        <begin position="1584"/>
        <end position="1601"/>
    </location>
</feature>
<feature type="topological domain" description="Extracellular" evidence="41">
    <location>
        <begin position="1602"/>
        <end position="1614"/>
    </location>
</feature>
<feature type="transmembrane region" description="Helical; Name=S4 of repeat IV" evidence="2">
    <location>
        <begin position="1615"/>
        <end position="1631"/>
    </location>
</feature>
<feature type="topological domain" description="Cytoplasmic" evidence="41">
    <location>
        <begin position="1632"/>
        <end position="1650"/>
    </location>
</feature>
<feature type="transmembrane region" description="Helical; Name=S5 of repeat IV" evidence="2">
    <location>
        <begin position="1651"/>
        <end position="1668"/>
    </location>
</feature>
<feature type="topological domain" description="Extracellular" evidence="41">
    <location>
        <begin position="1669"/>
        <end position="1690"/>
    </location>
</feature>
<feature type="intramembrane region" description="Pore-forming" evidence="2">
    <location>
        <begin position="1691"/>
        <end position="1713"/>
    </location>
</feature>
<feature type="topological domain" description="Extracellular" evidence="41">
    <location>
        <begin position="1714"/>
        <end position="1742"/>
    </location>
</feature>
<feature type="transmembrane region" description="Helical; Name=S6 of repeat IV" evidence="2">
    <location>
        <begin position="1743"/>
        <end position="1765"/>
    </location>
</feature>
<feature type="topological domain" description="Cytoplasmic" evidence="41">
    <location>
        <begin position="1766"/>
        <end position="1980"/>
    </location>
</feature>
<feature type="repeat" description="I" evidence="41">
    <location>
        <begin position="114"/>
        <end position="442"/>
    </location>
</feature>
<feature type="repeat" description="II" evidence="41">
    <location>
        <begin position="735"/>
        <end position="1007"/>
    </location>
</feature>
<feature type="repeat" description="III" evidence="41">
    <location>
        <begin position="1180"/>
        <end position="1495"/>
    </location>
</feature>
<feature type="repeat" description="IV" evidence="41">
    <location>
        <begin position="1504"/>
        <end position="1801"/>
    </location>
</feature>
<feature type="domain" description="IQ" evidence="8 41">
    <location>
        <begin position="1895"/>
        <end position="1924"/>
    </location>
</feature>
<feature type="region of interest" description="Disordered" evidence="9">
    <location>
        <begin position="1"/>
        <end position="20"/>
    </location>
</feature>
<feature type="region of interest" description="Disordered" evidence="9">
    <location>
        <begin position="28"/>
        <end position="62"/>
    </location>
</feature>
<feature type="region of interest" description="Disordered" evidence="9">
    <location>
        <begin position="446"/>
        <end position="530"/>
    </location>
</feature>
<feature type="region of interest" description="Disordered" evidence="9">
    <location>
        <begin position="568"/>
        <end position="602"/>
    </location>
</feature>
<feature type="region of interest" description="Disordered" evidence="9">
    <location>
        <begin position="1107"/>
        <end position="1148"/>
    </location>
</feature>
<feature type="region of interest" description="Disordered" evidence="9">
    <location>
        <begin position="1922"/>
        <end position="1980"/>
    </location>
</feature>
<feature type="compositionally biased region" description="Basic and acidic residues" evidence="9">
    <location>
        <begin position="28"/>
        <end position="61"/>
    </location>
</feature>
<feature type="compositionally biased region" description="Low complexity" evidence="9">
    <location>
        <begin position="474"/>
        <end position="486"/>
    </location>
</feature>
<feature type="compositionally biased region" description="Basic residues" evidence="9">
    <location>
        <begin position="489"/>
        <end position="500"/>
    </location>
</feature>
<feature type="compositionally biased region" description="Basic and acidic residues" evidence="9">
    <location>
        <begin position="501"/>
        <end position="530"/>
    </location>
</feature>
<feature type="compositionally biased region" description="Basic and acidic residues" evidence="9">
    <location>
        <begin position="586"/>
        <end position="602"/>
    </location>
</feature>
<feature type="compositionally biased region" description="Polar residues" evidence="9">
    <location>
        <begin position="1938"/>
        <end position="1949"/>
    </location>
</feature>
<feature type="compositionally biased region" description="Basic and acidic residues" evidence="9">
    <location>
        <begin position="1951"/>
        <end position="1980"/>
    </location>
</feature>
<feature type="binding site" evidence="35 47">
    <location>
        <position position="373"/>
    </location>
    <ligand>
        <name>Na(+)</name>
        <dbReference type="ChEBI" id="CHEBI:29101"/>
        <label>2</label>
    </ligand>
</feature>
<feature type="binding site" evidence="35 47">
    <location>
        <position position="936"/>
    </location>
    <ligand>
        <name>Na(+)</name>
        <dbReference type="ChEBI" id="CHEBI:29101"/>
        <label>1</label>
    </ligand>
</feature>
<feature type="binding site" evidence="35 47">
    <location>
        <position position="939"/>
    </location>
    <ligand>
        <name>Na(+)</name>
        <dbReference type="ChEBI" id="CHEBI:29101"/>
        <label>1</label>
    </ligand>
</feature>
<feature type="modified residue" description="Phosphoserine" evidence="3">
    <location>
        <position position="518"/>
    </location>
</feature>
<feature type="modified residue" description="Phosphoserine" evidence="3">
    <location>
        <position position="520"/>
    </location>
</feature>
<feature type="modified residue" description="Phosphoserine; by PKC" evidence="5">
    <location>
        <position position="1497"/>
    </location>
</feature>
<feature type="glycosylation site" description="N-linked (GlcNAc...) asparagine" evidence="7">
    <location>
        <position position="215"/>
    </location>
</feature>
<feature type="glycosylation site" description="N-linked (GlcNAc...) asparagine" evidence="35 47 48">
    <location>
        <position position="289"/>
    </location>
</feature>
<feature type="glycosylation site" description="N-linked (GlcNAc...) asparagine" evidence="34 35 45 47 48">
    <location>
        <position position="295"/>
    </location>
</feature>
<feature type="glycosylation site" description="N-linked (GlcNAc...) asparagine" evidence="34 35 45 47 48">
    <location>
        <position position="308"/>
    </location>
</feature>
<feature type="glycosylation site" description="N-linked (GlcNAc...) (high mannose) asparagine" evidence="34 35 46 47 48">
    <location>
        <position position="326"/>
    </location>
</feature>
<feature type="glycosylation site" description="N-linked (GlcNAc...) asparagine" evidence="34 35 45 47 48">
    <location>
        <position position="1358"/>
    </location>
</feature>
<feature type="glycosylation site" description="N-linked (GlcNAc...) asparagine" evidence="34 35 45 47 48">
    <location>
        <position position="1372"/>
    </location>
</feature>
<feature type="glycosylation site" description="N-linked (GlcNAc...) asparagine" evidence="7">
    <location>
        <position position="1383"/>
    </location>
</feature>
<feature type="disulfide bond" evidence="2">
    <location>
        <begin position="281"/>
        <end position="333"/>
    </location>
</feature>
<feature type="disulfide bond" description="Interchain; with SCN2B or SCN4B" evidence="4">
    <location>
        <position position="904"/>
    </location>
</feature>
<feature type="disulfide bond" description="Interchain; with the conotoxin GVIIJ (when the channel is not linked to SCN2B or SCN4B; the bond to SCN2B or SCN4B protects the channel from the inhibition by toxin)" evidence="4">
    <location>
        <position position="904"/>
    </location>
</feature>
<feature type="disulfide bond" evidence="34 35 46 47 48">
    <location>
        <begin position="906"/>
        <end position="912"/>
    </location>
</feature>
<feature type="disulfide bond" evidence="34 35 46 47 48">
    <location>
        <begin position="944"/>
        <end position="953"/>
    </location>
</feature>
<feature type="disulfide bond" evidence="34 35 46 47 48">
    <location>
        <begin position="1356"/>
        <end position="1376"/>
    </location>
</feature>
<feature type="disulfide bond" evidence="34 35 46 47 48">
    <location>
        <begin position="1721"/>
        <end position="1736"/>
    </location>
</feature>
<feature type="splice variant" id="VSP_050589" description="In isoform 2." evidence="40">
    <original>I</original>
    <variation>V</variation>
    <location>
        <position position="207"/>
    </location>
</feature>
<feature type="splice variant" id="VSP_050590" description="In isoform 2." evidence="40">
    <original>N</original>
    <variation>D</variation>
    <location>
        <position position="212"/>
    </location>
</feature>
<feature type="splice variant" id="VSP_050591" description="In isoform 3." evidence="40">
    <original>E</original>
    <variation>EVKIDKAATDDS</variation>
    <location>
        <position position="666"/>
    </location>
</feature>
<feature type="splice variant" id="VSP_038651" description="In isoform 5." evidence="38">
    <location>
        <begin position="1275"/>
        <end position="1315"/>
    </location>
</feature>
<feature type="splice variant" id="VSP_050592" description="In isoform 4." evidence="39">
    <original>SLVSLIANA</original>
    <variation>PLNLSGLI</variation>
    <location>
        <begin position="1275"/>
        <end position="1283"/>
    </location>
</feature>
<feature type="splice variant" id="VSP_050593" description="In isoform 4." evidence="39">
    <location>
        <begin position="1284"/>
        <end position="1980"/>
    </location>
</feature>
<feature type="sequence variant" id="VAR_076598" description="In DEE13; uncertain significance; no effect on voltage-gated sodium channel activity; dbSNP:rs1940955246." evidence="21">
    <original>D</original>
    <variation>N</variation>
    <location>
        <position position="58"/>
    </location>
</feature>
<feature type="sequence variant" id="VAR_078752" description="In DEE13." evidence="23">
    <original>F</original>
    <variation>L</variation>
    <location>
        <position position="210"/>
    </location>
</feature>
<feature type="sequence variant" id="VAR_076599" description="In DEE13; uncertain significance; requires 2 nucleotide substitutions." evidence="20">
    <original>N</original>
    <variation>R</variation>
    <location>
        <position position="215"/>
    </location>
</feature>
<feature type="sequence variant" id="VAR_071674" description="In DEE13; dbSNP:rs879255696." evidence="18">
    <original>V</original>
    <variation>D</variation>
    <location>
        <position position="216"/>
    </location>
</feature>
<feature type="sequence variant" id="VAR_072182" description="In DEE13; loss of function mutation; reduces voltage-gated sodium channel activity; dbSNP:rs672601319." evidence="19">
    <original>R</original>
    <variation>G</variation>
    <location>
        <position position="223"/>
    </location>
</feature>
<feature type="sequence variant" id="VAR_079722" description="In DEE13." evidence="31">
    <original>S</original>
    <variation>P</variation>
    <location>
        <position position="232"/>
    </location>
</feature>
<feature type="sequence variant" id="VAR_076600" description="In DEE13; uncertain significance; dbSNP:rs879255697." evidence="20">
    <original>F</original>
    <variation>S</variation>
    <location>
        <position position="260"/>
    </location>
</feature>
<feature type="sequence variant" id="VAR_078202" description="In DEE13; uncertain significance; dbSNP:rs1057519557." evidence="28">
    <original>N</original>
    <variation>S</variation>
    <location>
        <position position="307"/>
    </location>
</feature>
<feature type="sequence variant" id="VAR_076601" description="In DEE13; uncertain significance; dbSNP:rs879255698." evidence="22">
    <original>L</original>
    <variation>F</variation>
    <location>
        <position position="407"/>
    </location>
</feature>
<feature type="sequence variant" id="VAR_078753" description="In DEE13; uncertain significance." evidence="26">
    <original>A</original>
    <variation>T</variation>
    <location>
        <position position="408"/>
    </location>
</feature>
<feature type="sequence variant" id="VAR_076602" description="In DEE13; uncertain significance; dbSNP:rs879255699." evidence="20">
    <original>V</original>
    <variation>L</variation>
    <location>
        <position position="410"/>
    </location>
</feature>
<feature type="sequence variant" id="VAR_076603" description="In DEE13; uncertain significance." evidence="20">
    <original>E</original>
    <variation>V</variation>
    <location>
        <position position="479"/>
    </location>
</feature>
<feature type="sequence variant" id="VAR_078612" description="In DEE13; uncertain significance; dbSNP:rs76222829." evidence="14">
    <original>R</original>
    <variation>C</variation>
    <location>
        <position position="662"/>
    </location>
</feature>
<feature type="sequence variant" id="VAR_072183" description="In DEE13; gain-of-function mutation; increases voltage-gated sodium channel activity; dbSNP:rs797045013." evidence="17">
    <original>T</original>
    <variation>I</variation>
    <location>
        <position position="767"/>
    </location>
</feature>
<feature type="sequence variant" id="VAR_071675" description="In DEE13; dbSNP:rs879255700." evidence="18">
    <original>F</original>
    <variation>S</variation>
    <location>
        <position position="846"/>
    </location>
</feature>
<feature type="sequence variant" id="VAR_079723" description="In DEE13; requires 2 nucleotide substitutions." evidence="31">
    <original>R</original>
    <variation>E</variation>
    <location>
        <position position="850"/>
    </location>
</feature>
<feature type="sequence variant" id="VAR_076604" description="In DEE13; uncertain significance; dbSNP:rs587780586." evidence="22">
    <original>R</original>
    <variation>Q</variation>
    <location>
        <position position="850"/>
    </location>
</feature>
<feature type="sequence variant" id="VAR_076605" description="In DEE13; dbSNP:rs879255702." evidence="20 22">
    <original>A</original>
    <variation>T</variation>
    <location>
        <position position="890"/>
    </location>
</feature>
<feature type="sequence variant" id="VAR_079724" description="In DEE13; dbSNP:rs1592149793." evidence="31">
    <original>V</original>
    <variation>M</variation>
    <location>
        <position position="891"/>
    </location>
</feature>
<feature type="sequence variant" id="VAR_076606" description="In DEE13; uncertain significance; dbSNP:rs879255703." evidence="20">
    <original>V</original>
    <variation>D</variation>
    <location>
        <position position="960"/>
    </location>
</feature>
<feature type="sequence variant" id="VAR_078203" description="In DEE13; dbSNP:rs1057519540." evidence="28">
    <original>S</original>
    <variation>G</variation>
    <location>
        <position position="978"/>
    </location>
</feature>
<feature type="sequence variant" id="VAR_076607" description="In DEE13; gain-of-function mutation; increased voltage-gated sodium channel activity; dbSNP:rs876657399." evidence="21">
    <original>N</original>
    <variation>K</variation>
    <location>
        <position position="984"/>
    </location>
</feature>
<feature type="sequence variant" id="VAR_078613" description="In DEE13." evidence="14">
    <original>L</original>
    <variation>V</variation>
    <location>
        <position position="1279"/>
    </location>
</feature>
<feature type="sequence variant" id="VAR_078754" description="In DEE13; uncertain significance; dbSNP:rs794727361." evidence="26">
    <original>A</original>
    <variation>S</variation>
    <location>
        <position position="1323"/>
    </location>
</feature>
<feature type="sequence variant" id="VAR_071676" description="In DEE13; dbSNP:rs879255704." evidence="15 26">
    <original>I</original>
    <variation>V</variation>
    <location>
        <position position="1327"/>
    </location>
</feature>
<feature type="sequence variant" id="VAR_076608" description="In DEE13; uncertain significance; dbSNP:rs397514738." evidence="20">
    <original>L</original>
    <variation>V</variation>
    <location>
        <position position="1331"/>
    </location>
</feature>
<feature type="sequence variant" id="VAR_076609" description="In DEE13; loss of voltage-gated sodium channel activity; dbSNP:rs863223345." evidence="21">
    <original>G</original>
    <variation>S</variation>
    <location>
        <position position="1451"/>
    </location>
</feature>
<feature type="sequence variant" id="VAR_071677" description="In DEE13; dbSNP:rs587777722." evidence="18">
    <original>N</original>
    <variation>K</variation>
    <location>
        <position position="1466"/>
    </location>
</feature>
<feature type="sequence variant" id="VAR_071678" description="In DEE13; dbSNP:rs587777723." evidence="18">
    <original>N</original>
    <variation>T</variation>
    <location>
        <position position="1466"/>
    </location>
</feature>
<feature type="sequence variant" id="VAR_078204" description="In DEE13; dbSNP:rs796053216." evidence="28 31">
    <original>G</original>
    <variation>R</variation>
    <location>
        <position position="1475"/>
    </location>
</feature>
<feature type="sequence variant" id="VAR_076610" description="In DEE13; uncertain significance; dbSNP:rs796053217." evidence="20">
    <original>I</original>
    <variation>V</variation>
    <location>
        <position position="1479"/>
    </location>
</feature>
<feature type="sequence variant" id="VAR_076927" description="In BFIS5; dbSNP:rs879255652." evidence="24">
    <original>E</original>
    <variation>K</variation>
    <location>
        <position position="1483"/>
    </location>
</feature>
<feature type="sequence variant" id="VAR_076611" description="In DEE13; uncertain significance; dbSNP:rs587780454." evidence="20">
    <original>V</original>
    <variation>L</variation>
    <location>
        <position position="1592"/>
    </location>
</feature>
<feature type="sequence variant" id="VAR_076612" description="In DEE13; uncertain significance; dbSNP:rs879255705." evidence="22">
    <original>S</original>
    <variation>C</variation>
    <location>
        <position position="1596"/>
    </location>
</feature>
<feature type="sequence variant" id="VAR_079725" description="In DEE13." evidence="31">
    <original>V</original>
    <variation>A</variation>
    <location>
        <position position="1598"/>
    </location>
</feature>
<feature type="sequence variant" id="VAR_076613" description="In DEE13; uncertain significance." evidence="20">
    <original>I</original>
    <variation>R</variation>
    <location>
        <position position="1605"/>
    </location>
</feature>
<feature type="sequence variant" id="VAR_071679" description="In DEE13; gain-of-function mutation; increased voltage-gated sodium channel activity; impaired channel inactivation; dbSNP:rs587777721." evidence="18 20 22 25">
    <original>R</original>
    <variation>Q</variation>
    <location>
        <position position="1617"/>
    </location>
</feature>
<feature type="sequence variant" id="VAR_071680" description="In DEE13; dbSNP:rs879255709." evidence="18 20 28">
    <original>A</original>
    <variation>T</variation>
    <location>
        <position position="1650"/>
    </location>
</feature>
<feature type="sequence variant" id="VAR_082076" description="In MYOCL2; decreased voltage-gated sodium channel activity; results in significantly reduced inward sodium current without changes of voltage-dependent channel activation and inactivation; dbSNP:rs1565934070." evidence="32">
    <original>P</original>
    <variation>R</variation>
    <location>
        <position position="1719"/>
    </location>
</feature>
<feature type="sequence variant" id="VAR_078755" description="In DEE13; uncertain significance." evidence="26">
    <original>F</original>
    <variation>S</variation>
    <location>
        <position position="1754"/>
    </location>
</feature>
<feature type="sequence variant" id="VAR_067539" description="In DEE13; gain-of-function mutation; results in increased persistent sodium currents and incomplete channel inactivation; dbSNP:rs202151337." evidence="13">
    <original>N</original>
    <variation>D</variation>
    <location>
        <position position="1768"/>
    </location>
</feature>
<feature type="sequence variant" id="VAR_076614" description="In DEE13; uncertain significance; dbSNP:rs879255710." evidence="20">
    <original>Q</original>
    <variation>E</variation>
    <location>
        <position position="1801"/>
    </location>
</feature>
<feature type="sequence variant" id="VAR_078756" description="In DEE13; uncertain significance." evidence="26">
    <original>L</original>
    <variation>P</variation>
    <location>
        <position position="1865"/>
    </location>
</feature>
<feature type="sequence variant" id="VAR_076615" description="In DEE13; gain-of-function mutation; increased voltage-gated sodium channel activity; impaired channel inactivation; dbSNP:rs796053229." evidence="25">
    <original>R</original>
    <variation>L</variation>
    <location>
        <position position="1872"/>
    </location>
</feature>
<feature type="sequence variant" id="VAR_076616" description="In DEE13; gain-of-function mutation; increased voltage-gated sodium channel activity; impaired channel inactivation; dbSNP:rs796053229." evidence="20 25">
    <original>R</original>
    <variation>Q</variation>
    <location>
        <position position="1872"/>
    </location>
</feature>
<feature type="sequence variant" id="VAR_071681" description="In DEE13; gain-of-function mutation; increased voltage-gated sodium channel activity; impaired channel inactivation; no effect on interactions with FGF14, SCN1B, GNB2 and GNG3; dbSNP:rs796053228." evidence="18 20 25 28 31">
    <original>R</original>
    <variation>W</variation>
    <location>
        <position position="1872"/>
    </location>
</feature>
<feature type="sequence variant" id="VAR_076617" description="In DEE13 and BFIS5; also found in a patient with drug-resistant focal epilepsy and mild intellectual disability; dbSNP:rs587780455." evidence="27 28 31">
    <original>N</original>
    <variation>S</variation>
    <location>
        <position position="1877"/>
    </location>
</feature>
<feature type="mutagenesis site" description="Reduced inhibition by 4,9-anhydro-tetrodotoxin." evidence="35">
    <original>MD</original>
    <variation>TI</variation>
    <location>
        <begin position="1416"/>
        <end position="1417"/>
    </location>
</feature>
<feature type="sequence conflict" description="In Ref. 5; AAF35390." evidence="41" ref="5">
    <original>L</original>
    <variation>V</variation>
    <location>
        <position position="5"/>
    </location>
</feature>
<feature type="sequence conflict" description="In Ref. 1; AAD15789." evidence="41" ref="1">
    <original>V</original>
    <variation>L</variation>
    <location>
        <position position="133"/>
    </location>
</feature>
<feature type="sequence conflict" description="In Ref. 5; AAF35390." evidence="41" ref="5">
    <original>L</original>
    <variation>M</variation>
    <location>
        <position position="257"/>
    </location>
</feature>
<feature type="sequence conflict" description="In Ref. 3; ACM63162." evidence="41" ref="3">
    <original>F</original>
    <variation>I</variation>
    <location>
        <position position="273"/>
    </location>
</feature>
<feature type="sequence conflict" description="In Ref. 5; AAF35390." evidence="41" ref="5">
    <original>MGNLR</original>
    <variation>HGEPS</variation>
    <location>
        <begin position="274"/>
        <end position="278"/>
    </location>
</feature>
<feature type="sequence conflict" description="In Ref. 5; AAF35390." evidence="41" ref="5">
    <original>T</original>
    <variation>N</variation>
    <location>
        <position position="453"/>
    </location>
</feature>
<feature type="sequence conflict" description="In Ref. 5; AAF35390." evidence="41" ref="5">
    <original>S</original>
    <variation>F</variation>
    <location>
        <position position="477"/>
    </location>
</feature>
<feature type="sequence conflict" description="In Ref. 5; AAF35390." evidence="41" ref="5">
    <original>L</original>
    <variation>I</variation>
    <location>
        <position position="483"/>
    </location>
</feature>
<feature type="sequence conflict" description="In Ref. 5; AAF35390." evidence="41" ref="5">
    <original>R</original>
    <variation>S</variation>
    <location>
        <position position="492"/>
    </location>
</feature>
<feature type="sequence conflict" description="In Ref. 5; AAF35390." evidence="41" ref="5">
    <original>S</original>
    <variation>F</variation>
    <location>
        <position position="504"/>
    </location>
</feature>
<feature type="sequence conflict" description="In Ref. 5; AAF35390." evidence="41" ref="5">
    <original>LL</original>
    <variation>MF</variation>
    <location>
        <begin position="547"/>
        <end position="548"/>
    </location>
</feature>
<feature type="sequence conflict" description="In Ref. 3; ACM63162." evidence="41" ref="3">
    <original>M</original>
    <variation>V</variation>
    <location>
        <position position="1416"/>
    </location>
</feature>
<feature type="sequence conflict" description="In Ref. 1; AAD15789." evidence="41" ref="1">
    <original>V</original>
    <variation>I</variation>
    <location>
        <position position="1445"/>
    </location>
</feature>
<feature type="sequence conflict" description="In Ref. 1; AAD15789." evidence="41" ref="1">
    <original>V</original>
    <variation>I</variation>
    <location>
        <position position="1519"/>
    </location>
</feature>
<feature type="sequence conflict" description="In Ref. 5; AAF35390." evidence="41" ref="5">
    <original>T</original>
    <variation>A</variation>
    <location>
        <position position="1702"/>
    </location>
</feature>
<feature type="helix" evidence="49">
    <location>
        <begin position="19"/>
        <end position="34"/>
    </location>
</feature>
<feature type="turn" evidence="49">
    <location>
        <begin position="57"/>
        <end position="59"/>
    </location>
</feature>
<feature type="strand" evidence="49">
    <location>
        <begin position="60"/>
        <end position="63"/>
    </location>
</feature>
<feature type="helix" evidence="49">
    <location>
        <begin position="67"/>
        <end position="69"/>
    </location>
</feature>
<feature type="strand" evidence="49">
    <location>
        <begin position="89"/>
        <end position="91"/>
    </location>
</feature>
<feature type="strand" evidence="49">
    <location>
        <begin position="94"/>
        <end position="97"/>
    </location>
</feature>
<feature type="strand" evidence="49">
    <location>
        <begin position="103"/>
        <end position="106"/>
    </location>
</feature>
<feature type="turn" evidence="49">
    <location>
        <begin position="112"/>
        <end position="114"/>
    </location>
</feature>
<feature type="helix" evidence="49">
    <location>
        <begin position="117"/>
        <end position="119"/>
    </location>
</feature>
<feature type="helix" evidence="49">
    <location>
        <begin position="122"/>
        <end position="129"/>
    </location>
</feature>
<feature type="helix" evidence="49">
    <location>
        <begin position="132"/>
        <end position="150"/>
    </location>
</feature>
<feature type="strand" evidence="50">
    <location>
        <begin position="151"/>
        <end position="153"/>
    </location>
</feature>
<feature type="helix" evidence="49">
    <location>
        <begin position="156"/>
        <end position="158"/>
    </location>
</feature>
<feature type="helix" evidence="49">
    <location>
        <begin position="159"/>
        <end position="179"/>
    </location>
</feature>
<feature type="strand" evidence="49">
    <location>
        <begin position="182"/>
        <end position="187"/>
    </location>
</feature>
<feature type="helix" evidence="50">
    <location>
        <begin position="189"/>
        <end position="191"/>
    </location>
</feature>
<feature type="helix" evidence="49">
    <location>
        <begin position="193"/>
        <end position="207"/>
    </location>
</feature>
<feature type="strand" evidence="49">
    <location>
        <begin position="208"/>
        <end position="210"/>
    </location>
</feature>
<feature type="helix" evidence="49">
    <location>
        <begin position="216"/>
        <end position="223"/>
    </location>
</feature>
<feature type="helix" evidence="49">
    <location>
        <begin position="224"/>
        <end position="228"/>
    </location>
</feature>
<feature type="helix" evidence="49">
    <location>
        <begin position="229"/>
        <end position="233"/>
    </location>
</feature>
<feature type="helix" evidence="49">
    <location>
        <begin position="237"/>
        <end position="249"/>
    </location>
</feature>
<feature type="helix" evidence="49">
    <location>
        <begin position="253"/>
        <end position="272"/>
    </location>
</feature>
<feature type="turn" evidence="49">
    <location>
        <begin position="274"/>
        <end position="277"/>
    </location>
</feature>
<feature type="strand" evidence="49">
    <location>
        <begin position="278"/>
        <end position="283"/>
    </location>
</feature>
<feature type="helix" evidence="49">
    <location>
        <begin position="288"/>
        <end position="290"/>
    </location>
</feature>
<feature type="strand" evidence="49">
    <location>
        <begin position="294"/>
        <end position="297"/>
    </location>
</feature>
<feature type="turn" evidence="49">
    <location>
        <begin position="302"/>
        <end position="307"/>
    </location>
</feature>
<feature type="helix" evidence="51">
    <location>
        <begin position="309"/>
        <end position="311"/>
    </location>
</feature>
<feature type="strand" evidence="49">
    <location>
        <begin position="326"/>
        <end position="330"/>
    </location>
</feature>
<feature type="strand" evidence="49">
    <location>
        <begin position="337"/>
        <end position="341"/>
    </location>
</feature>
<feature type="turn" evidence="49">
    <location>
        <begin position="346"/>
        <end position="350"/>
    </location>
</feature>
<feature type="strand" evidence="51">
    <location>
        <begin position="353"/>
        <end position="355"/>
    </location>
</feature>
<feature type="helix" evidence="49">
    <location>
        <begin position="356"/>
        <end position="367"/>
    </location>
</feature>
<feature type="turn" evidence="51">
    <location>
        <begin position="369"/>
        <end position="371"/>
    </location>
</feature>
<feature type="helix" evidence="49">
    <location>
        <begin position="372"/>
        <end position="383"/>
    </location>
</feature>
<feature type="helix" evidence="49">
    <location>
        <begin position="385"/>
        <end position="387"/>
    </location>
</feature>
<feature type="helix" evidence="49">
    <location>
        <begin position="388"/>
        <end position="396"/>
    </location>
</feature>
<feature type="turn" evidence="49">
    <location>
        <begin position="397"/>
        <end position="399"/>
    </location>
</feature>
<feature type="helix" evidence="49">
    <location>
        <begin position="401"/>
        <end position="443"/>
    </location>
</feature>
<feature type="helix" evidence="51">
    <location>
        <begin position="722"/>
        <end position="730"/>
    </location>
</feature>
<feature type="helix" evidence="49">
    <location>
        <begin position="739"/>
        <end position="747"/>
    </location>
</feature>
<feature type="turn" evidence="49">
    <location>
        <begin position="748"/>
        <end position="750"/>
    </location>
</feature>
<feature type="helix" evidence="49">
    <location>
        <begin position="753"/>
        <end position="770"/>
    </location>
</feature>
<feature type="helix" evidence="49">
    <location>
        <begin position="779"/>
        <end position="806"/>
    </location>
</feature>
<feature type="helix" evidence="51">
    <location>
        <begin position="809"/>
        <end position="813"/>
    </location>
</feature>
<feature type="strand" evidence="49">
    <location>
        <begin position="815"/>
        <end position="817"/>
    </location>
</feature>
<feature type="helix" evidence="49">
    <location>
        <begin position="820"/>
        <end position="832"/>
    </location>
</feature>
<feature type="turn" evidence="51">
    <location>
        <begin position="834"/>
        <end position="836"/>
    </location>
</feature>
<feature type="strand" evidence="49">
    <location>
        <begin position="837"/>
        <end position="839"/>
    </location>
</feature>
<feature type="helix" evidence="49">
    <location>
        <begin position="840"/>
        <end position="843"/>
    </location>
</feature>
<feature type="helix" evidence="49">
    <location>
        <begin position="847"/>
        <end position="856"/>
    </location>
</feature>
<feature type="helix" evidence="49">
    <location>
        <begin position="859"/>
        <end position="871"/>
    </location>
</feature>
<feature type="turn" evidence="49">
    <location>
        <begin position="872"/>
        <end position="875"/>
    </location>
</feature>
<feature type="helix" evidence="49">
    <location>
        <begin position="876"/>
        <end position="897"/>
    </location>
</feature>
<feature type="helix" evidence="49">
    <location>
        <begin position="900"/>
        <end position="903"/>
    </location>
</feature>
<feature type="helix" evidence="49">
    <location>
        <begin position="905"/>
        <end position="907"/>
    </location>
</feature>
<feature type="strand" evidence="51">
    <location>
        <begin position="919"/>
        <end position="921"/>
    </location>
</feature>
<feature type="helix" evidence="49">
    <location>
        <begin position="922"/>
        <end position="934"/>
    </location>
</feature>
<feature type="helix" evidence="49">
    <location>
        <begin position="938"/>
        <end position="948"/>
    </location>
</feature>
<feature type="helix" evidence="49">
    <location>
        <begin position="951"/>
        <end position="979"/>
    </location>
</feature>
<feature type="helix" evidence="49">
    <location>
        <begin position="981"/>
        <end position="983"/>
    </location>
</feature>
<feature type="strand" evidence="49">
    <location>
        <begin position="986"/>
        <end position="988"/>
    </location>
</feature>
<feature type="helix" evidence="49">
    <location>
        <begin position="996"/>
        <end position="1006"/>
    </location>
</feature>
<feature type="strand" evidence="49">
    <location>
        <begin position="1176"/>
        <end position="1178"/>
    </location>
</feature>
<feature type="helix" evidence="49">
    <location>
        <begin position="1179"/>
        <end position="1196"/>
    </location>
</feature>
<feature type="helix" evidence="49">
    <location>
        <begin position="1200"/>
        <end position="1214"/>
    </location>
</feature>
<feature type="helix" evidence="49">
    <location>
        <begin position="1220"/>
        <end position="1223"/>
    </location>
</feature>
<feature type="helix" evidence="49">
    <location>
        <begin position="1226"/>
        <end position="1254"/>
    </location>
</feature>
<feature type="helix" evidence="49">
    <location>
        <begin position="1256"/>
        <end position="1260"/>
    </location>
</feature>
<feature type="helix" evidence="49">
    <location>
        <begin position="1263"/>
        <end position="1284"/>
    </location>
</feature>
<feature type="helix" evidence="49">
    <location>
        <begin position="1290"/>
        <end position="1296"/>
    </location>
</feature>
<feature type="helix" evidence="49">
    <location>
        <begin position="1297"/>
        <end position="1301"/>
    </location>
</feature>
<feature type="turn" evidence="49">
    <location>
        <begin position="1302"/>
        <end position="1305"/>
    </location>
</feature>
<feature type="turn" evidence="49">
    <location>
        <begin position="1307"/>
        <end position="1309"/>
    </location>
</feature>
<feature type="helix" evidence="49">
    <location>
        <begin position="1311"/>
        <end position="1346"/>
    </location>
</feature>
<feature type="strand" evidence="49">
    <location>
        <begin position="1349"/>
        <end position="1351"/>
    </location>
</feature>
<feature type="strand" evidence="49">
    <location>
        <begin position="1354"/>
        <end position="1358"/>
    </location>
</feature>
<feature type="turn" evidence="49">
    <location>
        <begin position="1359"/>
        <end position="1362"/>
    </location>
</feature>
<feature type="turn" evidence="49">
    <location>
        <begin position="1367"/>
        <end position="1369"/>
    </location>
</feature>
<feature type="helix" evidence="49">
    <location>
        <begin position="1373"/>
        <end position="1379"/>
    </location>
</feature>
<feature type="strand" evidence="49">
    <location>
        <begin position="1386"/>
        <end position="1391"/>
    </location>
</feature>
<feature type="helix" evidence="49">
    <location>
        <begin position="1399"/>
        <end position="1410"/>
    </location>
</feature>
<feature type="helix" evidence="49">
    <location>
        <begin position="1415"/>
        <end position="1424"/>
    </location>
</feature>
<feature type="strand" evidence="49">
    <location>
        <begin position="1427"/>
        <end position="1430"/>
    </location>
</feature>
<feature type="helix" evidence="49">
    <location>
        <begin position="1438"/>
        <end position="1440"/>
    </location>
</feature>
<feature type="helix" evidence="49">
    <location>
        <begin position="1441"/>
        <end position="1450"/>
    </location>
</feature>
<feature type="turn" evidence="49">
    <location>
        <begin position="1451"/>
        <end position="1453"/>
    </location>
</feature>
<feature type="helix" evidence="49">
    <location>
        <begin position="1454"/>
        <end position="1474"/>
    </location>
</feature>
<feature type="helix" evidence="49">
    <location>
        <begin position="1483"/>
        <end position="1496"/>
    </location>
</feature>
<feature type="turn" evidence="49">
    <location>
        <begin position="1510"/>
        <end position="1513"/>
    </location>
</feature>
<feature type="helix" evidence="49">
    <location>
        <begin position="1514"/>
        <end position="1519"/>
    </location>
</feature>
<feature type="helix" evidence="49">
    <location>
        <begin position="1522"/>
        <end position="1538"/>
    </location>
</feature>
<feature type="helix" evidence="49">
    <location>
        <begin position="1548"/>
        <end position="1572"/>
    </location>
</feature>
<feature type="turn" evidence="49">
    <location>
        <begin position="1573"/>
        <end position="1575"/>
    </location>
</feature>
<feature type="strand" evidence="49">
    <location>
        <begin position="1580"/>
        <end position="1584"/>
    </location>
</feature>
<feature type="helix" evidence="49">
    <location>
        <begin position="1585"/>
        <end position="1605"/>
    </location>
</feature>
<feature type="helix" evidence="49">
    <location>
        <begin position="1615"/>
        <end position="1620"/>
    </location>
</feature>
<feature type="helix" evidence="49">
    <location>
        <begin position="1621"/>
        <end position="1631"/>
    </location>
</feature>
<feature type="helix" evidence="49">
    <location>
        <begin position="1635"/>
        <end position="1672"/>
    </location>
</feature>
<feature type="strand" evidence="49">
    <location>
        <begin position="1673"/>
        <end position="1676"/>
    </location>
</feature>
<feature type="strand" evidence="49">
    <location>
        <begin position="1684"/>
        <end position="1690"/>
    </location>
</feature>
<feature type="helix" evidence="49">
    <location>
        <begin position="1691"/>
        <end position="1702"/>
    </location>
</feature>
<feature type="turn" evidence="51">
    <location>
        <begin position="1703"/>
        <end position="1706"/>
    </location>
</feature>
<feature type="turn" evidence="49">
    <location>
        <begin position="1707"/>
        <end position="1715"/>
    </location>
</feature>
<feature type="turn" evidence="49">
    <location>
        <begin position="1718"/>
        <end position="1720"/>
    </location>
</feature>
<feature type="helix" evidence="49">
    <location>
        <begin position="1739"/>
        <end position="1772"/>
    </location>
</feature>
<accession>Q9UQD0</accession>
<accession>B9VWG8</accession>
<accession>O95788</accession>
<accession>Q9NYX2</accession>
<accession>Q9UPB2</accession>
<proteinExistence type="evidence at protein level"/>
<keyword id="KW-0002">3D-structure</keyword>
<keyword id="KW-0025">Alternative splicing</keyword>
<keyword id="KW-0965">Cell junction</keyword>
<keyword id="KW-1003">Cell membrane</keyword>
<keyword id="KW-0966">Cell projection</keyword>
<keyword id="KW-0968">Cytoplasmic vesicle</keyword>
<keyword id="KW-0225">Disease variant</keyword>
<keyword id="KW-1015">Disulfide bond</keyword>
<keyword id="KW-0887">Epilepsy</keyword>
<keyword id="KW-0325">Glycoprotein</keyword>
<keyword id="KW-0991">Intellectual disability</keyword>
<keyword id="KW-0407">Ion channel</keyword>
<keyword id="KW-0406">Ion transport</keyword>
<keyword id="KW-0472">Membrane</keyword>
<keyword id="KW-0597">Phosphoprotein</keyword>
<keyword id="KW-1267">Proteomics identification</keyword>
<keyword id="KW-1185">Reference proteome</keyword>
<keyword id="KW-0677">Repeat</keyword>
<keyword id="KW-0915">Sodium</keyword>
<keyword id="KW-0894">Sodium channel</keyword>
<keyword id="KW-0739">Sodium transport</keyword>
<keyword id="KW-0812">Transmembrane</keyword>
<keyword id="KW-1133">Transmembrane helix</keyword>
<keyword id="KW-0813">Transport</keyword>
<keyword id="KW-0832">Ubl conjugation</keyword>
<keyword id="KW-0851">Voltage-gated channel</keyword>
<organism evidence="43">
    <name type="scientific">Homo sapiens</name>
    <name type="common">Human</name>
    <dbReference type="NCBI Taxonomy" id="9606"/>
    <lineage>
        <taxon>Eukaryota</taxon>
        <taxon>Metazoa</taxon>
        <taxon>Chordata</taxon>
        <taxon>Craniata</taxon>
        <taxon>Vertebrata</taxon>
        <taxon>Euteleostomi</taxon>
        <taxon>Mammalia</taxon>
        <taxon>Eutheria</taxon>
        <taxon>Euarchontoglires</taxon>
        <taxon>Primates</taxon>
        <taxon>Haplorrhini</taxon>
        <taxon>Catarrhini</taxon>
        <taxon>Hominidae</taxon>
        <taxon>Homo</taxon>
    </lineage>
</organism>
<reference key="1">
    <citation type="journal article" date="1997" name="J. Biol. Chem.">
        <title>Alternative splicing of the sodium channel SCN8A predicts a truncated two-domain protein in fetal brain and non-neuronal cells.</title>
        <authorList>
            <person name="Plummer N.W."/>
            <person name="McBurney M.W."/>
            <person name="Meisler M.H."/>
        </authorList>
    </citation>
    <scope>NUCLEOTIDE SEQUENCE (ISOFORM 4)</scope>
    <source>
        <tissue>Brain</tissue>
        <tissue>Fetal brain</tissue>
    </source>
</reference>
<reference key="2">
    <citation type="journal article" date="1998" name="Genomics">
        <title>Exon organization, coding sequence, physical mapping, and polymorphic intragenic markers for the human neuronal sodium channel gene SCN8A.</title>
        <authorList>
            <person name="Plummer N.W."/>
            <person name="Galt J."/>
            <person name="Jones J.M."/>
            <person name="Burgess D.L."/>
            <person name="Sprunger L.K."/>
            <person name="Kohrman D.C."/>
            <person name="Meisler M.H."/>
        </authorList>
    </citation>
    <scope>NUCLEOTIDE SEQUENCE [GENOMIC DNA] (ISOFORMS 1; 2 AND 3)</scope>
</reference>
<reference key="3">
    <citation type="journal article" date="2009" name="J. Biol. Chem.">
        <title>Regulation of podosome formation in macrophages by a splice variant of the sodium channel SCN8A.</title>
        <authorList>
            <person name="Carrithers M.D."/>
            <person name="Chatterjee G."/>
            <person name="Carrithers L.M."/>
            <person name="Offoha R."/>
            <person name="Iheagwara U."/>
            <person name="Rahner C."/>
            <person name="Graham M."/>
            <person name="Waxman S.G."/>
        </authorList>
    </citation>
    <scope>NUCLEOTIDE SEQUENCE [MRNA] (ISOFORM 5)</scope>
    <scope>FUNCTION (ISOFORM 5)</scope>
    <scope>SUBCELLULAR LOCATION (ISOFORM 5)</scope>
    <scope>TISSUE SPECIFICITY (ISOFORM 5)</scope>
    <source>
        <tissue>Monocytic leukemia</tissue>
    </source>
</reference>
<reference key="4">
    <citation type="submission" date="1999-06" db="EMBL/GenBank/DDBJ databases">
        <title>cDNA sequence of human sodium channel, SCN8A.</title>
        <authorList>
            <person name="Lin C."/>
            <person name="Numakura C."/>
            <person name="Kiyoshi H."/>
        </authorList>
    </citation>
    <scope>NUCLEOTIDE SEQUENCE [MRNA] (ISOFORM 1)</scope>
</reference>
<reference key="5">
    <citation type="submission" date="2000-01" db="EMBL/GenBank/DDBJ databases">
        <title>Cloning of cDNA for human voltage-gated sodium channel alpha subunit, SCN8A.</title>
        <authorList>
            <person name="Jeong S.-Y."/>
            <person name="Goto J."/>
            <person name="Kanazawa I."/>
        </authorList>
    </citation>
    <scope>NUCLEOTIDE SEQUENCE [MRNA] (ISOFORM 1)</scope>
</reference>
<reference key="6">
    <citation type="journal article" date="2006" name="Nature">
        <title>The finished DNA sequence of human chromosome 12.</title>
        <authorList>
            <person name="Scherer S.E."/>
            <person name="Muzny D.M."/>
            <person name="Buhay C.J."/>
            <person name="Chen R."/>
            <person name="Cree A."/>
            <person name="Ding Y."/>
            <person name="Dugan-Rocha S."/>
            <person name="Gill R."/>
            <person name="Gunaratne P."/>
            <person name="Harris R.A."/>
            <person name="Hawes A.C."/>
            <person name="Hernandez J."/>
            <person name="Hodgson A.V."/>
            <person name="Hume J."/>
            <person name="Jackson A."/>
            <person name="Khan Z.M."/>
            <person name="Kovar-Smith C."/>
            <person name="Lewis L.R."/>
            <person name="Lozado R.J."/>
            <person name="Metzker M.L."/>
            <person name="Milosavljevic A."/>
            <person name="Miner G.R."/>
            <person name="Montgomery K.T."/>
            <person name="Morgan M.B."/>
            <person name="Nazareth L.V."/>
            <person name="Scott G."/>
            <person name="Sodergren E."/>
            <person name="Song X.-Z."/>
            <person name="Steffen D."/>
            <person name="Lovering R.C."/>
            <person name="Wheeler D.A."/>
            <person name="Worley K.C."/>
            <person name="Yuan Y."/>
            <person name="Zhang Z."/>
            <person name="Adams C.Q."/>
            <person name="Ansari-Lari M.A."/>
            <person name="Ayele M."/>
            <person name="Brown M.J."/>
            <person name="Chen G."/>
            <person name="Chen Z."/>
            <person name="Clerc-Blankenburg K.P."/>
            <person name="Davis C."/>
            <person name="Delgado O."/>
            <person name="Dinh H.H."/>
            <person name="Draper H."/>
            <person name="Gonzalez-Garay M.L."/>
            <person name="Havlak P."/>
            <person name="Jackson L.R."/>
            <person name="Jacob L.S."/>
            <person name="Kelly S.H."/>
            <person name="Li L."/>
            <person name="Li Z."/>
            <person name="Liu J."/>
            <person name="Liu W."/>
            <person name="Lu J."/>
            <person name="Maheshwari M."/>
            <person name="Nguyen B.-V."/>
            <person name="Okwuonu G.O."/>
            <person name="Pasternak S."/>
            <person name="Perez L.M."/>
            <person name="Plopper F.J.H."/>
            <person name="Santibanez J."/>
            <person name="Shen H."/>
            <person name="Tabor P.E."/>
            <person name="Verduzco D."/>
            <person name="Waldron L."/>
            <person name="Wang Q."/>
            <person name="Williams G.A."/>
            <person name="Zhang J."/>
            <person name="Zhou J."/>
            <person name="Allen C.C."/>
            <person name="Amin A.G."/>
            <person name="Anyalebechi V."/>
            <person name="Bailey M."/>
            <person name="Barbaria J.A."/>
            <person name="Bimage K.E."/>
            <person name="Bryant N.P."/>
            <person name="Burch P.E."/>
            <person name="Burkett C.E."/>
            <person name="Burrell K.L."/>
            <person name="Calderon E."/>
            <person name="Cardenas V."/>
            <person name="Carter K."/>
            <person name="Casias K."/>
            <person name="Cavazos I."/>
            <person name="Cavazos S.R."/>
            <person name="Ceasar H."/>
            <person name="Chacko J."/>
            <person name="Chan S.N."/>
            <person name="Chavez D."/>
            <person name="Christopoulos C."/>
            <person name="Chu J."/>
            <person name="Cockrell R."/>
            <person name="Cox C.D."/>
            <person name="Dang M."/>
            <person name="Dathorne S.R."/>
            <person name="David R."/>
            <person name="Davis C.M."/>
            <person name="Davy-Carroll L."/>
            <person name="Deshazo D.R."/>
            <person name="Donlin J.E."/>
            <person name="D'Souza L."/>
            <person name="Eaves K.A."/>
            <person name="Egan A."/>
            <person name="Emery-Cohen A.J."/>
            <person name="Escotto M."/>
            <person name="Flagg N."/>
            <person name="Forbes L.D."/>
            <person name="Gabisi A.M."/>
            <person name="Garza M."/>
            <person name="Hamilton C."/>
            <person name="Henderson N."/>
            <person name="Hernandez O."/>
            <person name="Hines S."/>
            <person name="Hogues M.E."/>
            <person name="Huang M."/>
            <person name="Idlebird D.G."/>
            <person name="Johnson R."/>
            <person name="Jolivet A."/>
            <person name="Jones S."/>
            <person name="Kagan R."/>
            <person name="King L.M."/>
            <person name="Leal B."/>
            <person name="Lebow H."/>
            <person name="Lee S."/>
            <person name="LeVan J.M."/>
            <person name="Lewis L.C."/>
            <person name="London P."/>
            <person name="Lorensuhewa L.M."/>
            <person name="Loulseged H."/>
            <person name="Lovett D.A."/>
            <person name="Lucier A."/>
            <person name="Lucier R.L."/>
            <person name="Ma J."/>
            <person name="Madu R.C."/>
            <person name="Mapua P."/>
            <person name="Martindale A.D."/>
            <person name="Martinez E."/>
            <person name="Massey E."/>
            <person name="Mawhiney S."/>
            <person name="Meador M.G."/>
            <person name="Mendez S."/>
            <person name="Mercado C."/>
            <person name="Mercado I.C."/>
            <person name="Merritt C.E."/>
            <person name="Miner Z.L."/>
            <person name="Minja E."/>
            <person name="Mitchell T."/>
            <person name="Mohabbat F."/>
            <person name="Mohabbat K."/>
            <person name="Montgomery B."/>
            <person name="Moore N."/>
            <person name="Morris S."/>
            <person name="Munidasa M."/>
            <person name="Ngo R.N."/>
            <person name="Nguyen N.B."/>
            <person name="Nickerson E."/>
            <person name="Nwaokelemeh O.O."/>
            <person name="Nwokenkwo S."/>
            <person name="Obregon M."/>
            <person name="Oguh M."/>
            <person name="Oragunye N."/>
            <person name="Oviedo R.J."/>
            <person name="Parish B.J."/>
            <person name="Parker D.N."/>
            <person name="Parrish J."/>
            <person name="Parks K.L."/>
            <person name="Paul H.A."/>
            <person name="Payton B.A."/>
            <person name="Perez A."/>
            <person name="Perrin W."/>
            <person name="Pickens A."/>
            <person name="Primus E.L."/>
            <person name="Pu L.-L."/>
            <person name="Puazo M."/>
            <person name="Quiles M.M."/>
            <person name="Quiroz J.B."/>
            <person name="Rabata D."/>
            <person name="Reeves K."/>
            <person name="Ruiz S.J."/>
            <person name="Shao H."/>
            <person name="Sisson I."/>
            <person name="Sonaike T."/>
            <person name="Sorelle R.P."/>
            <person name="Sutton A.E."/>
            <person name="Svatek A.F."/>
            <person name="Svetz L.A."/>
            <person name="Tamerisa K.S."/>
            <person name="Taylor T.R."/>
            <person name="Teague B."/>
            <person name="Thomas N."/>
            <person name="Thorn R.D."/>
            <person name="Trejos Z.Y."/>
            <person name="Trevino B.K."/>
            <person name="Ukegbu O.N."/>
            <person name="Urban J.B."/>
            <person name="Vasquez L.I."/>
            <person name="Vera V.A."/>
            <person name="Villasana D.M."/>
            <person name="Wang L."/>
            <person name="Ward-Moore S."/>
            <person name="Warren J.T."/>
            <person name="Wei X."/>
            <person name="White F."/>
            <person name="Williamson A.L."/>
            <person name="Wleczyk R."/>
            <person name="Wooden H.S."/>
            <person name="Wooden S.H."/>
            <person name="Yen J."/>
            <person name="Yoon L."/>
            <person name="Yoon V."/>
            <person name="Zorrilla S.E."/>
            <person name="Nelson D."/>
            <person name="Kucherlapati R."/>
            <person name="Weinstock G."/>
            <person name="Gibbs R.A."/>
        </authorList>
    </citation>
    <scope>NUCLEOTIDE SEQUENCE [LARGE SCALE GENOMIC DNA]</scope>
</reference>
<reference key="7">
    <citation type="journal article" date="2004" name="J. Neurosci.">
        <title>Fibroblast growth factor homologous factor 2B: association with Nav1.6 and selective colocalization at nodes of Ranvier of dorsal root axons.</title>
        <authorList>
            <person name="Wittmack E.K."/>
            <person name="Rush A.M."/>
            <person name="Craner M.J."/>
            <person name="Goldfarb M."/>
            <person name="Waxman S.G."/>
            <person name="Dib-Hajj S.D."/>
        </authorList>
    </citation>
    <scope>INTERACTION WITH FGF13</scope>
</reference>
<reference key="8">
    <citation type="journal article" date="2006" name="J. Med. Genet.">
        <title>Heterozygosity for a protein truncation mutation of sodium channel SCN8A in a patient with cerebellar atrophy, ataxia, and mental retardation.</title>
        <authorList>
            <person name="Trudeau M.M."/>
            <person name="Dalton J.C."/>
            <person name="Day J.W."/>
            <person name="Ranum L.P."/>
            <person name="Meisler M.H."/>
        </authorList>
    </citation>
    <scope>INVOLVEMENT IN CIAT</scope>
</reference>
<reference key="9">
    <citation type="journal article" date="2014" name="Proc. Natl. Acad. Sci. U.S.A.">
        <title>A disulfide tether stabilizes the block of sodium channels by the conotoxin muO[section sign]-GVIIJ.</title>
        <authorList>
            <person name="Gajewiak J."/>
            <person name="Azam L."/>
            <person name="Imperial J."/>
            <person name="Walewska A."/>
            <person name="Green B.R."/>
            <person name="Bandyopadhyay P.K."/>
            <person name="Raghuraman S."/>
            <person name="Ueberheide B."/>
            <person name="Bern M."/>
            <person name="Zhou H.M."/>
            <person name="Minassian N.A."/>
            <person name="Hagan R.H."/>
            <person name="Flinspach M."/>
            <person name="Liu Y."/>
            <person name="Bulaj G."/>
            <person name="Wickenden A.D."/>
            <person name="Olivera B.M."/>
            <person name="Yoshikami D."/>
            <person name="Zhang M.M."/>
        </authorList>
    </citation>
    <scope>INTERACTION WITH THE CONOTOXIN GVIIJ</scope>
</reference>
<reference key="10">
    <citation type="journal article" date="2017" name="Sci. Rep.">
        <title>The tarantula toxin beta/delta-TRTX-Pre1a highlights the importance of the S1-S2 voltage-sensor region for sodium channel subtype selectivity.</title>
        <authorList>
            <person name="Wingerd J.S."/>
            <person name="Mozar C.A."/>
            <person name="Ussing C.A."/>
            <person name="Murali S.S."/>
            <person name="Chin Y.K."/>
            <person name="Cristofori-Armstrong B."/>
            <person name="Durek T."/>
            <person name="Gilchrist J."/>
            <person name="Vaughan C.W."/>
            <person name="Bosmans F."/>
            <person name="Adams D.J."/>
            <person name="Lewis R.J."/>
            <person name="Alewood P.F."/>
            <person name="Mobli M."/>
            <person name="Christie M.J."/>
            <person name="Rash L.D."/>
        </authorList>
    </citation>
    <scope>SUBUNIT</scope>
    <scope>INTERACTION WITH THE SPIDER BETA/DELTA-THERAPHOTOXIN-PRE1A</scope>
    <scope>SITE SER-1574</scope>
</reference>
<reference key="11">
    <citation type="journal article" date="2021" name="Am. J. Hum. Genet.">
        <title>Missense variants in the N-terminal domain of the A isoform of FHF2/FGF13 cause an X-linked developmental and epileptic encephalopathy.</title>
        <authorList>
            <consortium name="Genomics England Research Consortium"/>
            <person name="Fry A.E."/>
            <person name="Marra C."/>
            <person name="Derrick A.V."/>
            <person name="Pickrell W.O."/>
            <person name="Higgins A.T."/>
            <person name="Te Water Naude J."/>
            <person name="McClatchey M.A."/>
            <person name="Davies S.J."/>
            <person name="Metcalfe K.A."/>
            <person name="Tan H.J."/>
            <person name="Mohanraj R."/>
            <person name="Avula S."/>
            <person name="Williams D."/>
            <person name="Brady L.I."/>
            <person name="Mesterman R."/>
            <person name="Tarnopolsky M.A."/>
            <person name="Zhang Y."/>
            <person name="Yang Y."/>
            <person name="Wang X."/>
            <person name="Rees M.I."/>
            <person name="Goldfarb M."/>
            <person name="Chung S.K."/>
        </authorList>
    </citation>
    <scope>FUNCTION</scope>
    <scope>INTERACTION WITH FGF13</scope>
</reference>
<reference key="12">
    <citation type="journal article" date="2023" name="Nat. Commun.">
        <title>Pain-causing stinging nettle toxins target TMEM233 to modulate NaV1.7 function.</title>
        <authorList>
            <person name="Jami S."/>
            <person name="Deuis J.R."/>
            <person name="Klasfauseweh T."/>
            <person name="Cheng X."/>
            <person name="Kurdyukov S."/>
            <person name="Chung F."/>
            <person name="Okorokov A.L."/>
            <person name="Li S."/>
            <person name="Zhang J."/>
            <person name="Cristofori-Armstrong B."/>
            <person name="Israel M.R."/>
            <person name="Ju R.J."/>
            <person name="Robinson S.D."/>
            <person name="Zhao P."/>
            <person name="Ragnarsson L."/>
            <person name="Andersson A."/>
            <person name="Tran P."/>
            <person name="Schendel V."/>
            <person name="McMahon K.L."/>
            <person name="Tran H.N.T."/>
            <person name="Chin Y.K."/>
            <person name="Zhu Y."/>
            <person name="Liu J."/>
            <person name="Crawford T."/>
            <person name="Purushothamvasan S."/>
            <person name="Habib A.M."/>
            <person name="Andersson D.A."/>
            <person name="Rash L.D."/>
            <person name="Wood J.N."/>
            <person name="Zhao J."/>
            <person name="Stehbens S.J."/>
            <person name="Mobli M."/>
            <person name="Leffler A."/>
            <person name="Jiang D."/>
            <person name="Cox J.J."/>
            <person name="Waxman S.G."/>
            <person name="Dib-Hajj S.D."/>
            <person name="Gregory Neely G."/>
            <person name="Durek T."/>
            <person name="Vetter I."/>
        </authorList>
    </citation>
    <scope>SUBUNIT</scope>
</reference>
<reference evidence="47 48" key="13">
    <citation type="journal article" date="2023" name="Nat. Commun.">
        <title>Structure of human NaV1.6 channel reveals Na+ selectivity and pore blockade by 4,9-anhydro-tetrodotoxin.</title>
        <authorList>
            <person name="Li Y."/>
            <person name="Yuan T."/>
            <person name="Huang B."/>
            <person name="Zhou F."/>
            <person name="Peng C."/>
            <person name="Li X."/>
            <person name="Qiu Y."/>
            <person name="Yang B."/>
            <person name="Zhao Y."/>
            <person name="Huang Z."/>
            <person name="Jiang D."/>
        </authorList>
    </citation>
    <scope>STRUCTURE BY ELECTRON MICROSCOPY (3.30 ANGSTROMS) IN COMPLEX WITH SCN1B; SCN2B; NA(+) AND INHIBITOR 4,9-ANHYDRO-TETRODOTOXIN</scope>
    <scope>FUNCTION</scope>
    <scope>TRANSPORTER ACTIVITY</scope>
    <scope>ACTIVITY REGULATION</scope>
    <scope>SUBUNIT</scope>
    <scope>TOPOLOGY</scope>
    <scope>DISULFIDE BONDS</scope>
    <scope>GLYCOSYLATION AT ASN-289; ASN-295; ASN-308; ASN-326; ASN-1358 AND ASN-1372</scope>
    <scope>MUTAGENESIS OF 1416-MET-ASP-1417</scope>
</reference>
<reference evidence="46" key="14">
    <citation type="journal article" date="2023" name="Proc. Natl. Acad. Sci. U.S.A.">
        <title>Cryo-EM structure of human voltage-gated sodium channel Nav1.6.</title>
        <authorList>
            <person name="Fan X."/>
            <person name="Huang J."/>
            <person name="Jin X."/>
            <person name="Yan N."/>
        </authorList>
    </citation>
    <scope>STRUCTURE BY ELECTRON MICROSCOPY (3.10 ANGSTROMS) IN COMPLEX WITH SCN1B</scope>
    <scope>FUNCTION</scope>
    <scope>TRANSPORTER ACTIVITY</scope>
    <scope>SUBUNIT</scope>
    <scope>DISULFIDE BONDS</scope>
    <scope>TOPOLOGY</scope>
    <scope>GLYCOSYLATION AT ASN-295; ASN-308; ASN-326; ASN-1358 AND ASN-1372</scope>
</reference>
<reference key="15">
    <citation type="journal article" date="2012" name="Am. J. Hum. Genet.">
        <title>de novo pathogenic SCN8A mutation identified by whole-genome sequencing of a family quartet affected by infantile epileptic encephalopathy and SUDEP.</title>
        <authorList>
            <person name="Veeramah K.R."/>
            <person name="O'Brien J.E."/>
            <person name="Meisler M.H."/>
            <person name="Cheng X."/>
            <person name="Dib-Hajj S.D."/>
            <person name="Waxman S.G."/>
            <person name="Talwar D."/>
            <person name="Girirajan S."/>
            <person name="Eichler E.E."/>
            <person name="Restifo L.L."/>
            <person name="Erickson R.P."/>
            <person name="Hammer M.F."/>
        </authorList>
    </citation>
    <scope>VARIANT DEE13 ASP-1768</scope>
    <scope>CHARACTERIZATION OF VARIANT DEE13 ASP-1768</scope>
</reference>
<reference key="16">
    <citation type="journal article" date="2013" name="J. Child Neurol.">
        <title>De novo SCN8A mutation identified by whole-exome sequencing in a boy with neonatal epileptic encephalopathy, multiple congenital anomalies, and movement disorders.</title>
        <authorList>
            <person name="Vaher U."/>
            <person name="Noukas M."/>
            <person name="Nikopensius T."/>
            <person name="Kals M."/>
            <person name="Annilo T."/>
            <person name="Nelis M."/>
            <person name="Ounap K."/>
            <person name="Reimand T."/>
            <person name="Talvik I."/>
            <person name="Ilves P."/>
            <person name="Piirsoo A."/>
            <person name="Seppet E."/>
            <person name="Metspalu A."/>
            <person name="Talvik T."/>
        </authorList>
    </citation>
    <scope>VARIANT DEE13 VAL-1327</scope>
</reference>
<reference key="17">
    <citation type="journal article" date="2013" name="Nat. Genet.">
        <title>Targeted resequencing in epileptic encephalopathies identifies de novo mutations in CHD2 and SYNGAP1.</title>
        <authorList>
            <person name="Carvill G.L."/>
            <person name="Heavin S.B."/>
            <person name="Yendle S.C."/>
            <person name="McMahon J.M."/>
            <person name="O'Roak B.J."/>
            <person name="Cook J."/>
            <person name="Khan A."/>
            <person name="Dorschner M.O."/>
            <person name="Weaver M."/>
            <person name="Calvert S."/>
            <person name="Malone S."/>
            <person name="Wallace G."/>
            <person name="Stanley T."/>
            <person name="Bye A.M."/>
            <person name="Bleasel A."/>
            <person name="Howell K.B."/>
            <person name="Kivity S."/>
            <person name="Mackay M.T."/>
            <person name="Rodriguez-Casero V."/>
            <person name="Webster R."/>
            <person name="Korczyn A."/>
            <person name="Afawi Z."/>
            <person name="Zelnick N."/>
            <person name="Lerman-Sagie T."/>
            <person name="Lev D."/>
            <person name="Moeller R.S."/>
            <person name="Gill D."/>
            <person name="Andrade D.M."/>
            <person name="Freeman J.L."/>
            <person name="Sadleir L.G."/>
            <person name="Shendure J."/>
            <person name="Berkovic S.F."/>
            <person name="Scheffer I.E."/>
            <person name="Mefford H.C."/>
        </authorList>
    </citation>
    <scope>VARIANTS DEE13 CYS-662 AND VAL-1279</scope>
</reference>
<reference key="18">
    <citation type="journal article" date="2014" name="Epilepsia">
        <title>Early onset epileptic encephalopathy caused by de novo SCN8A mutations.</title>
        <authorList>
            <person name="Ohba C."/>
            <person name="Kato M."/>
            <person name="Takahashi S."/>
            <person name="Lerman-Sagie T."/>
            <person name="Lev D."/>
            <person name="Terashima H."/>
            <person name="Kubota M."/>
            <person name="Kawawaki H."/>
            <person name="Matsufuji M."/>
            <person name="Kojima Y."/>
            <person name="Tateno A."/>
            <person name="Goldberg-Stern H."/>
            <person name="Straussberg R."/>
            <person name="Marom D."/>
            <person name="Leshinsky-Silver E."/>
            <person name="Nakashima M."/>
            <person name="Nishiyama K."/>
            <person name="Tsurusaki Y."/>
            <person name="Miyake N."/>
            <person name="Tanaka F."/>
            <person name="Matsumoto N."/>
            <person name="Saitsu H."/>
        </authorList>
    </citation>
    <scope>VARIANTS DEE13 ASP-216; SER-846; LYS-1466; THR-1466; GLN-1617; THR-1650 AND TRP-1872</scope>
</reference>
<reference key="19">
    <citation type="journal article" date="2014" name="Epilepsy Res.">
        <title>Characterization of a de novo SCN8A mutation in a patient with epileptic encephalopathy.</title>
        <authorList>
            <person name="de Kovel C.G."/>
            <person name="Meisler M.H."/>
            <person name="Brilstra E.H."/>
            <person name="van Berkestijn F.M."/>
            <person name="Slot R.V."/>
            <person name="van Lieshout S."/>
            <person name="Nijman I.J."/>
            <person name="O'Brien J.E."/>
            <person name="Hammer M.F."/>
            <person name="Estacion M."/>
            <person name="Waxman S.G."/>
            <person name="Dib-Hajj S.D."/>
            <person name="Koeleman B.P."/>
        </authorList>
    </citation>
    <scope>VARIANT DEE13 GLY-223</scope>
    <scope>CHARACTERIZATION OF VARIANT DEE13 GLY-223</scope>
    <scope>FUNCTION</scope>
</reference>
<reference key="20">
    <citation type="journal article" date="2014" name="Neurobiol. Dis.">
        <title>A novel de novo mutation of SCN8A (Nav1.6) with enhanced channel activation in a child with epileptic encephalopathy.</title>
        <authorList>
            <person name="Estacion M."/>
            <person name="O'Brien J.E."/>
            <person name="Conravey A."/>
            <person name="Hammer M.F."/>
            <person name="Waxman S.G."/>
            <person name="Dib-Hajj S.D."/>
            <person name="Meisler M.H."/>
        </authorList>
    </citation>
    <scope>VARIANT DEE13 ILE-767</scope>
    <scope>CHARACTERIZATION OF VARIANT DEE13 ILE-767</scope>
    <scope>FUNCTION</scope>
</reference>
<reference key="21">
    <citation type="journal article" date="2015" name="Epilepsia">
        <title>SCN8A mutations in Chinese children with early onset epilepsy and intellectual disability.</title>
        <authorList>
            <person name="Kong W."/>
            <person name="Zhang Y."/>
            <person name="Gao Y."/>
            <person name="Liu X."/>
            <person name="Gao K."/>
            <person name="Xie H."/>
            <person name="Wang J."/>
            <person name="Wu Y."/>
            <person name="Zhang Y."/>
            <person name="Wu X."/>
            <person name="Jiang Y."/>
        </authorList>
    </citation>
    <scope>VARIANTS DEE13 PHE-407; GLN-850; THR-890; CYS-1596 AND GLN-1617</scope>
</reference>
<reference key="22">
    <citation type="journal article" date="2015" name="Epilepsia">
        <title>Diagnostic yield of genetic testing in epileptic encephalopathy in childhood.</title>
        <authorList>
            <person name="Mercimek-Mahmutoglu S."/>
            <person name="Patel J."/>
            <person name="Cordeiro D."/>
            <person name="Hewson S."/>
            <person name="Callen D."/>
            <person name="Donner E.J."/>
            <person name="Hahn C.D."/>
            <person name="Kannu P."/>
            <person name="Kobayashi J."/>
            <person name="Minassian B.A."/>
            <person name="Moharir M."/>
            <person name="Siriwardena K."/>
            <person name="Weiss S.K."/>
            <person name="Weksberg R."/>
            <person name="Snead O.C. III"/>
        </authorList>
    </citation>
    <scope>VARIANT DEE13 LEU-210</scope>
</reference>
<reference key="23">
    <citation type="journal article" date="2015" name="J. Med. Genet.">
        <title>De novo gain-of-function and loss-of-function mutations of SCN8A in patients with intellectual disabilities and epilepsy.</title>
        <authorList>
            <person name="Blanchard M.G."/>
            <person name="Willemsen M.H."/>
            <person name="Walker J.B."/>
            <person name="Dib-Hajj S.D."/>
            <person name="Waxman S.G."/>
            <person name="Jongmans M.C."/>
            <person name="Kleefstra T."/>
            <person name="van de Warrenburg B.P."/>
            <person name="Praamstra P."/>
            <person name="Nicolai J."/>
            <person name="Yntema H.G."/>
            <person name="Bindels R.J."/>
            <person name="Meisler M.H."/>
            <person name="Kamsteeg E.J."/>
        </authorList>
    </citation>
    <scope>VARIANTS DEE13 ASN-58; LYS-984 AND SER-1451</scope>
    <scope>CHARACTERIZATION OF VARIANTS DEE13 ASN-58; LYS-984 AND SER-1451</scope>
    <scope>FUNCTION</scope>
</reference>
<reference key="24">
    <citation type="journal article" date="2015" name="Neurology">
        <title>The phenotypic spectrum of SCN8A encephalopathy.</title>
        <authorList>
            <consortium name="EuroEPINOMICS RES Consortium CRP"/>
            <person name="Larsen J."/>
            <person name="Carvill G.L."/>
            <person name="Gardella E."/>
            <person name="Kluger G."/>
            <person name="Schmiedel G."/>
            <person name="Barisic N."/>
            <person name="Depienne C."/>
            <person name="Brilstra E."/>
            <person name="Mang Y."/>
            <person name="Nielsen J.E."/>
            <person name="Kirkpatrick M."/>
            <person name="Goudie D."/>
            <person name="Goldman R."/>
            <person name="Jaehn J.A."/>
            <person name="Jepsen B."/>
            <person name="Gill D."/>
            <person name="Doecker M."/>
            <person name="Biskup S."/>
            <person name="McMahon J.M."/>
            <person name="Koeleman B."/>
            <person name="Harris M."/>
            <person name="Braun K."/>
            <person name="de Kovel C.G."/>
            <person name="Marini C."/>
            <person name="Specchio N."/>
            <person name="Djemie T."/>
            <person name="Weckhuysen S."/>
            <person name="Tommerup N."/>
            <person name="Troncoso M."/>
            <person name="Troncoso L."/>
            <person name="Bevot A."/>
            <person name="Wolff M."/>
            <person name="Hjalgrim H."/>
            <person name="Guerrini R."/>
            <person name="Scheffer I.E."/>
            <person name="Mefford H.C."/>
            <person name="Moeller R.S."/>
        </authorList>
    </citation>
    <scope>VARIANTS DEE13 ARG-215; SER-260; LEU-410; VAL-479; THR-890; ASP-960; VAL-1331; VAL-1479; LEU-1592; ARG-1605; GLN-1617; THR-1650; GLU-1801; GLN-1872 AND TRP-1872</scope>
</reference>
<reference key="25">
    <citation type="journal article" date="2016" name="Eur. J. Paediatr. Neurol.">
        <title>Autosomal dominant SCN8A mutation with an unusually mild phenotype.</title>
        <authorList>
            <person name="Anand G."/>
            <person name="Collett-White F."/>
            <person name="Orsini A."/>
            <person name="Thomas S."/>
            <person name="Jayapal S."/>
            <person name="Trump N."/>
            <person name="Zaiwalla Z."/>
            <person name="Jayawant S."/>
        </authorList>
    </citation>
    <scope>VARIANT DEE13 SER-1877</scope>
    <scope>VARIANT BFIS5 SER-1877</scope>
</reference>
<reference key="26">
    <citation type="journal article" date="2016" name="Ann. Clin. Transl. Neurol.">
        <title>Pathogenic mechanism of recurrent mutations of SCN8A in epileptic encephalopathy.</title>
        <authorList>
            <person name="Wagnon J.L."/>
            <person name="Barker B.S."/>
            <person name="Hounshell J.A."/>
            <person name="Haaxma C.A."/>
            <person name="Shealy A."/>
            <person name="Moss T."/>
            <person name="Parikh S."/>
            <person name="Messer R.D."/>
            <person name="Patel M.K."/>
            <person name="Meisler M.H."/>
        </authorList>
    </citation>
    <scope>VARIANTS DEE13 GLN-1617; GLN-1872; LEU-1872 AND TRP-1872</scope>
    <scope>CHARACTERIZATION OF VARIANTS DEE13 GLN-1617; GLN-1872; LEU-1872 AND TRP-1872</scope>
    <scope>FUNCTION</scope>
    <scope>INTERACTION WITH FGF14; GBG3; GBB2 AND SCN1B</scope>
</reference>
<reference key="27">
    <citation type="journal article" date="2016" name="Ann. Neurol.">
        <title>Benign infantile seizures and paroxysmal dyskinesia caused by an SCN8A mutation.</title>
        <authorList>
            <person name="Gardella E."/>
            <person name="Becker F."/>
            <person name="Moeller R.S."/>
            <person name="Schubert J."/>
            <person name="Lemke J.R."/>
            <person name="Larsen L.H."/>
            <person name="Eiberg H."/>
            <person name="Nothnagel M."/>
            <person name="Thiele H."/>
            <person name="Altmueller J."/>
            <person name="Syrbe S."/>
            <person name="Merkenschlager A."/>
            <person name="Bast T."/>
            <person name="Steinhoff B."/>
            <person name="Nuernberg P."/>
            <person name="Mang Y."/>
            <person name="Bakke Moeller L."/>
            <person name="Gellert P."/>
            <person name="Heron S.E."/>
            <person name="Dibbens L.M."/>
            <person name="Weckhuysen S."/>
            <person name="Dahl H.A."/>
            <person name="Biskup S."/>
            <person name="Tommerup N."/>
            <person name="Hjalgrim H."/>
            <person name="Lerche H."/>
            <person name="Beniczky S."/>
            <person name="Weber Y.G."/>
        </authorList>
    </citation>
    <scope>VARIANT BFIS5 LYS-1483</scope>
    <scope>INVOLVEMENT IN BFIS5</scope>
</reference>
<reference key="28">
    <citation type="journal article" date="2016" name="J. Med. Genet.">
        <title>Improving diagnosis and broadening the phenotypes in early-onset seizure and severe developmental delay disorders through gene panel analysis.</title>
        <authorList>
            <person name="Trump N."/>
            <person name="McTague A."/>
            <person name="Brittain H."/>
            <person name="Papandreou A."/>
            <person name="Meyer E."/>
            <person name="Ngoh A."/>
            <person name="Palmer R."/>
            <person name="Morrogh D."/>
            <person name="Boustred C."/>
            <person name="Hurst J.A."/>
            <person name="Jenkins L."/>
            <person name="Kurian M.A."/>
            <person name="Scott R.H."/>
        </authorList>
    </citation>
    <scope>VARIANTS DEE13 THR-408; SER-1323; VAL-1327; SER-1754 AND PRO-1865</scope>
</reference>
<reference key="29">
    <citation type="journal article" date="2017" name="BMC Med. Genet.">
        <title>SCN8A mutations in Chinese patients with early onset epileptic encephalopathy and benign infantile seizures.</title>
        <authorList>
            <person name="Wang J."/>
            <person name="Gao H."/>
            <person name="Bao X."/>
            <person name="Zhang Q."/>
            <person name="Li J."/>
            <person name="Wei L."/>
            <person name="Wu X."/>
            <person name="Chen Y."/>
            <person name="Yu S."/>
        </authorList>
    </citation>
    <scope>VARIANTS DEE13 PRO-232; GLU-850; MET-891; ARG-1475; ALA-1598; TRP-1872 AND SER-1877</scope>
</reference>
<reference key="30">
    <citation type="journal article" date="2017" name="Hum. Mutat.">
        <title>Diagnostic targeted resequencing in 349 patients with drug-resistant pediatric epilepsies identifies causative mutations in 30 different genes.</title>
        <authorList>
            <consortium name="Clinical Study Group"/>
            <person name="Parrini E."/>
            <person name="Marini C."/>
            <person name="Mei D."/>
            <person name="Galuppi A."/>
            <person name="Cellini E."/>
            <person name="Pucatti D."/>
            <person name="Chiti L."/>
            <person name="Rutigliano D."/>
            <person name="Bianchini C."/>
            <person name="Virdo S."/>
            <person name="De Vita D."/>
            <person name="Bigoni S."/>
            <person name="Barba C."/>
            <person name="Mari F."/>
            <person name="Montomoli M."/>
            <person name="Pisano T."/>
            <person name="Rosati A."/>
            <person name="Guerrini R."/>
        </authorList>
    </citation>
    <scope>VARIANTS DEE13 SER-307; GLY-978; ARG-1475; THR-1650 AND TRP-1872</scope>
    <scope>VARIANT SER-1877</scope>
</reference>
<reference key="31">
    <citation type="journal article" date="2017" name="Nat. Commun.">
        <title>CDYL suppresses epileptogenesis in mice through repression of axonal Nav1.6 sodium channel expression.</title>
        <authorList>
            <person name="Liu Y."/>
            <person name="Lai S."/>
            <person name="Ma W."/>
            <person name="Ke W."/>
            <person name="Zhang C."/>
            <person name="Liu S."/>
            <person name="Zhang Y."/>
            <person name="Pei F."/>
            <person name="Li S."/>
            <person name="Yi M."/>
            <person name="Shu Y."/>
            <person name="Shang Y."/>
            <person name="Liang J."/>
            <person name="Huang Z."/>
        </authorList>
    </citation>
    <scope>TISSUE SPECIFICITY</scope>
</reference>
<reference key="32">
    <citation type="journal article" date="2018" name="Hum. Mutat.">
        <title>Partial loss-of-function of sodium channel SCN8A in familial isolated myoclonus.</title>
        <authorList>
            <person name="Wagnon J.L."/>
            <person name="Mencacci N.E."/>
            <person name="Barker B.S."/>
            <person name="Wengert E.R."/>
            <person name="Bhatia K.P."/>
            <person name="Balint B."/>
            <person name="Carecchio M."/>
            <person name="Wood N.W."/>
            <person name="Patel M.K."/>
            <person name="Meisler M.H."/>
        </authorList>
    </citation>
    <scope>FUNCTION</scope>
    <scope>TRANSPORTER ACTIVITY</scope>
    <scope>SUBCELLULAR LOCATION</scope>
    <scope>INVOLVEMENT IN MYOCL2</scope>
    <scope>VARIANT MYOCL2 ARG-1719</scope>
    <scope>CHARACTERIZATION OF VARIANT MYOCL2 ARG-1719</scope>
</reference>
<name>SCN8A_HUMAN</name>
<protein>
    <recommendedName>
        <fullName>Sodium channel protein type 8 subunit alpha</fullName>
    </recommendedName>
    <alternativeName>
        <fullName>Sodium channel protein type VIII subunit alpha</fullName>
    </alternativeName>
    <alternativeName>
        <fullName evidence="38">Voltage-gated sodium channel subunit alpha Nav1.6</fullName>
    </alternativeName>
</protein>
<gene>
    <name evidence="44" type="primary">SCN8A</name>
    <name type="synonym">MED</name>
</gene>
<dbReference type="EMBL" id="AF050736">
    <property type="protein sequence ID" value="AAD15789.1"/>
    <property type="molecule type" value="Genomic_DNA"/>
</dbReference>
<dbReference type="EMBL" id="AF050711">
    <property type="protein sequence ID" value="AAD15789.1"/>
    <property type="status" value="JOINED"/>
    <property type="molecule type" value="Genomic_DNA"/>
</dbReference>
<dbReference type="EMBL" id="AF050712">
    <property type="protein sequence ID" value="AAD15789.1"/>
    <property type="status" value="JOINED"/>
    <property type="molecule type" value="Genomic_DNA"/>
</dbReference>
<dbReference type="EMBL" id="AF050713">
    <property type="protein sequence ID" value="AAD15789.1"/>
    <property type="status" value="JOINED"/>
    <property type="molecule type" value="Genomic_DNA"/>
</dbReference>
<dbReference type="EMBL" id="AF050714">
    <property type="protein sequence ID" value="AAD15789.1"/>
    <property type="status" value="JOINED"/>
    <property type="molecule type" value="Genomic_DNA"/>
</dbReference>
<dbReference type="EMBL" id="AF050715">
    <property type="protein sequence ID" value="AAD15789.1"/>
    <property type="status" value="JOINED"/>
    <property type="molecule type" value="Genomic_DNA"/>
</dbReference>
<dbReference type="EMBL" id="AF050716">
    <property type="protein sequence ID" value="AAD15789.1"/>
    <property type="status" value="JOINED"/>
    <property type="molecule type" value="Genomic_DNA"/>
</dbReference>
<dbReference type="EMBL" id="AF050717">
    <property type="protein sequence ID" value="AAD15789.1"/>
    <property type="status" value="JOINED"/>
    <property type="molecule type" value="Genomic_DNA"/>
</dbReference>
<dbReference type="EMBL" id="AF050718">
    <property type="protein sequence ID" value="AAD15789.1"/>
    <property type="status" value="JOINED"/>
    <property type="molecule type" value="Genomic_DNA"/>
</dbReference>
<dbReference type="EMBL" id="AF050719">
    <property type="protein sequence ID" value="AAD15789.1"/>
    <property type="status" value="JOINED"/>
    <property type="molecule type" value="Genomic_DNA"/>
</dbReference>
<dbReference type="EMBL" id="AF050720">
    <property type="protein sequence ID" value="AAD15789.1"/>
    <property type="status" value="JOINED"/>
    <property type="molecule type" value="Genomic_DNA"/>
</dbReference>
<dbReference type="EMBL" id="AF050721">
    <property type="protein sequence ID" value="AAD15789.1"/>
    <property type="status" value="JOINED"/>
    <property type="molecule type" value="Genomic_DNA"/>
</dbReference>
<dbReference type="EMBL" id="AF050722">
    <property type="protein sequence ID" value="AAD15789.1"/>
    <property type="status" value="JOINED"/>
    <property type="molecule type" value="Genomic_DNA"/>
</dbReference>
<dbReference type="EMBL" id="AF050723">
    <property type="protein sequence ID" value="AAD15789.1"/>
    <property type="status" value="JOINED"/>
    <property type="molecule type" value="Genomic_DNA"/>
</dbReference>
<dbReference type="EMBL" id="AF050724">
    <property type="protein sequence ID" value="AAD15789.1"/>
    <property type="status" value="JOINED"/>
    <property type="molecule type" value="Genomic_DNA"/>
</dbReference>
<dbReference type="EMBL" id="AF050725">
    <property type="protein sequence ID" value="AAD15789.1"/>
    <property type="status" value="JOINED"/>
    <property type="molecule type" value="Genomic_DNA"/>
</dbReference>
<dbReference type="EMBL" id="AF050726">
    <property type="protein sequence ID" value="AAD15789.1"/>
    <property type="status" value="JOINED"/>
    <property type="molecule type" value="Genomic_DNA"/>
</dbReference>
<dbReference type="EMBL" id="AF050727">
    <property type="protein sequence ID" value="AAD15789.1"/>
    <property type="status" value="JOINED"/>
    <property type="molecule type" value="Genomic_DNA"/>
</dbReference>
<dbReference type="EMBL" id="AF050728">
    <property type="protein sequence ID" value="AAD15789.1"/>
    <property type="status" value="JOINED"/>
    <property type="molecule type" value="Genomic_DNA"/>
</dbReference>
<dbReference type="EMBL" id="AF050729">
    <property type="protein sequence ID" value="AAD15789.1"/>
    <property type="status" value="JOINED"/>
    <property type="molecule type" value="Genomic_DNA"/>
</dbReference>
<dbReference type="EMBL" id="AF050730">
    <property type="protein sequence ID" value="AAD15789.1"/>
    <property type="status" value="JOINED"/>
    <property type="molecule type" value="Genomic_DNA"/>
</dbReference>
<dbReference type="EMBL" id="AF050731">
    <property type="protein sequence ID" value="AAD15789.1"/>
    <property type="status" value="JOINED"/>
    <property type="molecule type" value="Genomic_DNA"/>
</dbReference>
<dbReference type="EMBL" id="AF050732">
    <property type="protein sequence ID" value="AAD15789.1"/>
    <property type="status" value="JOINED"/>
    <property type="molecule type" value="Genomic_DNA"/>
</dbReference>
<dbReference type="EMBL" id="AF050733">
    <property type="protein sequence ID" value="AAD15789.1"/>
    <property type="status" value="JOINED"/>
    <property type="molecule type" value="Genomic_DNA"/>
</dbReference>
<dbReference type="EMBL" id="AF050734">
    <property type="protein sequence ID" value="AAD15789.1"/>
    <property type="status" value="JOINED"/>
    <property type="molecule type" value="Genomic_DNA"/>
</dbReference>
<dbReference type="EMBL" id="AF050735">
    <property type="protein sequence ID" value="AAD15789.1"/>
    <property type="status" value="JOINED"/>
    <property type="molecule type" value="Genomic_DNA"/>
</dbReference>
<dbReference type="EMBL" id="AF049618">
    <property type="protein sequence ID" value="AAD20439.1"/>
    <property type="molecule type" value="Genomic_DNA"/>
</dbReference>
<dbReference type="EMBL" id="FJ611941">
    <property type="protein sequence ID" value="ACM63162.1"/>
    <property type="molecule type" value="mRNA"/>
</dbReference>
<dbReference type="EMBL" id="AB027567">
    <property type="protein sequence ID" value="BAA78033.1"/>
    <property type="molecule type" value="mRNA"/>
</dbReference>
<dbReference type="EMBL" id="AF225988">
    <property type="protein sequence ID" value="AAF35390.1"/>
    <property type="molecule type" value="mRNA"/>
</dbReference>
<dbReference type="EMBL" id="AC013421">
    <property type="status" value="NOT_ANNOTATED_CDS"/>
    <property type="molecule type" value="Genomic_DNA"/>
</dbReference>
<dbReference type="EMBL" id="AC025097">
    <property type="status" value="NOT_ANNOTATED_CDS"/>
    <property type="molecule type" value="Genomic_DNA"/>
</dbReference>
<dbReference type="EMBL" id="AC068987">
    <property type="status" value="NOT_ANNOTATED_CDS"/>
    <property type="molecule type" value="Genomic_DNA"/>
</dbReference>
<dbReference type="EMBL" id="AC140060">
    <property type="status" value="NOT_ANNOTATED_CDS"/>
    <property type="molecule type" value="Genomic_DNA"/>
</dbReference>
<dbReference type="CCDS" id="CCDS44891.1">
    <molecule id="Q9UQD0-1"/>
</dbReference>
<dbReference type="CCDS" id="CCDS53794.1">
    <molecule id="Q9UQD0-5"/>
</dbReference>
<dbReference type="CCDS" id="CCDS81692.1">
    <molecule id="Q9UQD0-2"/>
</dbReference>
<dbReference type="RefSeq" id="NP_001171455.1">
    <molecule id="Q9UQD0-5"/>
    <property type="nucleotide sequence ID" value="NM_001177984.3"/>
</dbReference>
<dbReference type="RefSeq" id="NP_001317189.1">
    <molecule id="Q9UQD0-2"/>
    <property type="nucleotide sequence ID" value="NM_001330260.2"/>
</dbReference>
<dbReference type="RefSeq" id="NP_055006.1">
    <molecule id="Q9UQD0-1"/>
    <property type="nucleotide sequence ID" value="NM_014191.4"/>
</dbReference>
<dbReference type="RefSeq" id="XP_006719619.1">
    <property type="nucleotide sequence ID" value="XM_006719556.3"/>
</dbReference>
<dbReference type="RefSeq" id="XP_011536953.1">
    <property type="nucleotide sequence ID" value="XM_011538651.2"/>
</dbReference>
<dbReference type="RefSeq" id="XP_016875283.1">
    <property type="nucleotide sequence ID" value="XM_017019794.1"/>
</dbReference>
<dbReference type="PDB" id="8FHD">
    <property type="method" value="EM"/>
    <property type="resolution" value="3.10 A"/>
    <property type="chains" value="A=1-1980"/>
</dbReference>
<dbReference type="PDB" id="8GZ1">
    <property type="method" value="EM"/>
    <property type="resolution" value="3.40 A"/>
    <property type="chains" value="B=1-1980"/>
</dbReference>
<dbReference type="PDB" id="8GZ2">
    <property type="method" value="EM"/>
    <property type="resolution" value="3.30 A"/>
    <property type="chains" value="B=1-1980"/>
</dbReference>
<dbReference type="PDBsum" id="8FHD"/>
<dbReference type="PDBsum" id="8GZ1"/>
<dbReference type="PDBsum" id="8GZ2"/>
<dbReference type="EMDB" id="EMD-29082"/>
<dbReference type="EMDB" id="EMD-34387"/>
<dbReference type="EMDB" id="EMD-34388"/>
<dbReference type="SMR" id="Q9UQD0"/>
<dbReference type="BioGRID" id="112238">
    <property type="interactions" value="10"/>
</dbReference>
<dbReference type="ComplexPortal" id="CPX-8673">
    <property type="entry name" value="Nav1.6 voltage-gated sodium channel complex, SCN1B-SCN2B variant"/>
</dbReference>
<dbReference type="ComplexPortal" id="CPX-8674">
    <property type="entry name" value="Nav1.6 voltage-gated sodium channel complex, SCN1B-SCN4B variant"/>
</dbReference>
<dbReference type="ComplexPortal" id="CPX-8675">
    <property type="entry name" value="Nav1.6 voltage-gated sodium channel complex, SCN3B-SCN4B variant"/>
</dbReference>
<dbReference type="ComplexPortal" id="CPX-8676">
    <property type="entry name" value="Nav1.6 voltage-gated sodium channel complex, SCN2B-SCN3B variant"/>
</dbReference>
<dbReference type="CORUM" id="Q9UQD0"/>
<dbReference type="FunCoup" id="Q9UQD0">
    <property type="interactions" value="529"/>
</dbReference>
<dbReference type="IntAct" id="Q9UQD0">
    <property type="interactions" value="4"/>
</dbReference>
<dbReference type="STRING" id="9606.ENSP00000346534"/>
<dbReference type="BindingDB" id="Q9UQD0"/>
<dbReference type="ChEMBL" id="CHEMBL5202"/>
<dbReference type="DrugBank" id="DB09088">
    <property type="generic name" value="Amylocaine"/>
</dbReference>
<dbReference type="DrugBank" id="DB09009">
    <property type="generic name" value="Articaine"/>
</dbReference>
<dbReference type="DrugBank" id="DB13746">
    <property type="generic name" value="Bioallethrin"/>
</dbReference>
<dbReference type="DrugBank" id="DB05541">
    <property type="generic name" value="Brivaracetam"/>
</dbReference>
<dbReference type="DrugBank" id="DB00564">
    <property type="generic name" value="Carbamazepine"/>
</dbReference>
<dbReference type="DrugBank" id="DB06119">
    <property type="generic name" value="Cenobamate"/>
</dbReference>
<dbReference type="DrugBank" id="DB01161">
    <property type="generic name" value="Chloroprocaine"/>
</dbReference>
<dbReference type="DrugBank" id="DB00907">
    <property type="generic name" value="Cocaine"/>
</dbReference>
<dbReference type="DrugBank" id="DB13269">
    <property type="generic name" value="Dichlorobenzyl alcohol"/>
</dbReference>
<dbReference type="DrugBank" id="DB13961">
    <property type="generic name" value="Fish oil"/>
</dbReference>
<dbReference type="DrugBank" id="DB00555">
    <property type="generic name" value="Lamotrigine"/>
</dbReference>
<dbReference type="DrugBank" id="DB00776">
    <property type="generic name" value="Oxcarbazepine"/>
</dbReference>
<dbReference type="DrugBank" id="DB11186">
    <property type="generic name" value="Pentoxyverine"/>
</dbReference>
<dbReference type="DrugBank" id="DB00252">
    <property type="generic name" value="Phenytoin"/>
</dbReference>
<dbReference type="DrugBank" id="DB09345">
    <property type="generic name" value="Pramocaine"/>
</dbReference>
<dbReference type="DrugBank" id="DB01069">
    <property type="generic name" value="Promethazine"/>
</dbReference>
<dbReference type="DrugBank" id="DB09342">
    <property type="generic name" value="Propoxycaine"/>
</dbReference>
<dbReference type="DrugBank" id="DB00243">
    <property type="generic name" value="Ranolazine"/>
</dbReference>
<dbReference type="DrugBank" id="DB09085">
    <property type="generic name" value="Tetracaine"/>
</dbReference>
<dbReference type="DrugBank" id="DB05232">
    <property type="generic name" value="Tetrodotoxin"/>
</dbReference>
<dbReference type="DrugBank" id="DB00273">
    <property type="generic name" value="Topiramate"/>
</dbReference>
<dbReference type="DrugBank" id="DB00313">
    <property type="generic name" value="Valproic acid"/>
</dbReference>
<dbReference type="DrugCentral" id="Q9UQD0"/>
<dbReference type="GuidetoPHARMACOLOGY" id="583"/>
<dbReference type="TCDB" id="1.A.1.10.8">
    <property type="family name" value="the voltage-gated ion channel (vic) superfamily"/>
</dbReference>
<dbReference type="GlyConnect" id="1754">
    <property type="glycosylation" value="1 N-Linked glycan (1 site)"/>
</dbReference>
<dbReference type="GlyCosmos" id="Q9UQD0">
    <property type="glycosylation" value="8 sites, No reported glycans"/>
</dbReference>
<dbReference type="GlyGen" id="Q9UQD0">
    <property type="glycosylation" value="10 sites, 1 O-linked glycan (1 site)"/>
</dbReference>
<dbReference type="iPTMnet" id="Q9UQD0"/>
<dbReference type="PhosphoSitePlus" id="Q9UQD0"/>
<dbReference type="SwissPalm" id="Q9UQD0"/>
<dbReference type="BioMuta" id="SCN8A"/>
<dbReference type="DMDM" id="34098756"/>
<dbReference type="jPOST" id="Q9UQD0"/>
<dbReference type="MassIVE" id="Q9UQD0"/>
<dbReference type="PaxDb" id="9606-ENSP00000346534"/>
<dbReference type="PeptideAtlas" id="Q9UQD0"/>
<dbReference type="ProteomicsDB" id="85544">
    <molecule id="Q9UQD0-1"/>
</dbReference>
<dbReference type="ProteomicsDB" id="85545">
    <molecule id="Q9UQD0-2"/>
</dbReference>
<dbReference type="ProteomicsDB" id="85546">
    <molecule id="Q9UQD0-3"/>
</dbReference>
<dbReference type="ProteomicsDB" id="85547">
    <molecule id="Q9UQD0-4"/>
</dbReference>
<dbReference type="ProteomicsDB" id="85548">
    <molecule id="Q9UQD0-5"/>
</dbReference>
<dbReference type="ABCD" id="Q9UQD0">
    <property type="antibodies" value="1 sequenced antibody"/>
</dbReference>
<dbReference type="Antibodypedia" id="26454">
    <property type="antibodies" value="220 antibodies from 30 providers"/>
</dbReference>
<dbReference type="DNASU" id="6334"/>
<dbReference type="Ensembl" id="ENST00000354534.11">
    <molecule id="Q9UQD0-1"/>
    <property type="protein sequence ID" value="ENSP00000346534.4"/>
    <property type="gene ID" value="ENSG00000196876.19"/>
</dbReference>
<dbReference type="Ensembl" id="ENST00000355133.7">
    <molecule id="Q9UQD0-5"/>
    <property type="protein sequence ID" value="ENSP00000347255.4"/>
    <property type="gene ID" value="ENSG00000196876.19"/>
</dbReference>
<dbReference type="Ensembl" id="ENST00000545061.5">
    <molecule id="Q9UQD0-5"/>
    <property type="protein sequence ID" value="ENSP00000440360.1"/>
    <property type="gene ID" value="ENSG00000196876.19"/>
</dbReference>
<dbReference type="Ensembl" id="ENST00000599343.5">
    <molecule id="Q9UQD0-3"/>
    <property type="protein sequence ID" value="ENSP00000476447.3"/>
    <property type="gene ID" value="ENSG00000196876.19"/>
</dbReference>
<dbReference type="Ensembl" id="ENST00000627620.5">
    <molecule id="Q9UQD0-2"/>
    <property type="protein sequence ID" value="ENSP00000487583.2"/>
    <property type="gene ID" value="ENSG00000196876.19"/>
</dbReference>
<dbReference type="Ensembl" id="ENST00000662684.1">
    <molecule id="Q9UQD0-2"/>
    <property type="protein sequence ID" value="ENSP00000499636.1"/>
    <property type="gene ID" value="ENSG00000196876.19"/>
</dbReference>
<dbReference type="GeneID" id="6334"/>
<dbReference type="KEGG" id="hsa:6334"/>
<dbReference type="MANE-Select" id="ENST00000627620.5">
    <molecule id="Q9UQD0-2"/>
    <property type="protein sequence ID" value="ENSP00000487583.2"/>
    <property type="RefSeq nucleotide sequence ID" value="NM_001330260.2"/>
    <property type="RefSeq protein sequence ID" value="NP_001317189.1"/>
</dbReference>
<dbReference type="UCSC" id="uc001ryw.4">
    <molecule id="Q9UQD0-1"/>
    <property type="organism name" value="human"/>
</dbReference>
<dbReference type="AGR" id="HGNC:10596"/>
<dbReference type="CTD" id="6334"/>
<dbReference type="DisGeNET" id="6334"/>
<dbReference type="GeneCards" id="SCN8A"/>
<dbReference type="GeneReviews" id="SCN8A"/>
<dbReference type="HGNC" id="HGNC:10596">
    <property type="gene designation" value="SCN8A"/>
</dbReference>
<dbReference type="HPA" id="ENSG00000196876">
    <property type="expression patterns" value="Group enriched (brain, pituitary gland, retina)"/>
</dbReference>
<dbReference type="MalaCards" id="SCN8A"/>
<dbReference type="MIM" id="600702">
    <property type="type" value="gene"/>
</dbReference>
<dbReference type="MIM" id="614306">
    <property type="type" value="phenotype"/>
</dbReference>
<dbReference type="MIM" id="614558">
    <property type="type" value="phenotype"/>
</dbReference>
<dbReference type="MIM" id="617080">
    <property type="type" value="phenotype"/>
</dbReference>
<dbReference type="MIM" id="618364">
    <property type="type" value="phenotype"/>
</dbReference>
<dbReference type="neXtProt" id="NX_Q9UQD0"/>
<dbReference type="OpenTargets" id="ENSG00000196876"/>
<dbReference type="Orphanet" id="178469">
    <property type="disease" value="Autosomal dominant non-syndromic intellectual disability"/>
</dbReference>
<dbReference type="Orphanet" id="31709">
    <property type="disease" value="Infantile convulsions and choreoathetosis"/>
</dbReference>
<dbReference type="Orphanet" id="442835">
    <property type="disease" value="Non-specific early-onset epileptic encephalopathy"/>
</dbReference>
<dbReference type="Orphanet" id="306">
    <property type="disease" value="Self-limited infantile epilepsy"/>
</dbReference>
<dbReference type="PharmGKB" id="PA35009"/>
<dbReference type="VEuPathDB" id="HostDB:ENSG00000196876"/>
<dbReference type="eggNOG" id="KOG2301">
    <property type="taxonomic scope" value="Eukaryota"/>
</dbReference>
<dbReference type="GeneTree" id="ENSGT00940000156263"/>
<dbReference type="InParanoid" id="Q9UQD0"/>
<dbReference type="OMA" id="YNDSNFY"/>
<dbReference type="OrthoDB" id="2984333at2759"/>
<dbReference type="PAN-GO" id="Q9UQD0">
    <property type="GO annotations" value="6 GO annotations based on evolutionary models"/>
</dbReference>
<dbReference type="PhylomeDB" id="Q9UQD0"/>
<dbReference type="TreeFam" id="TF323985"/>
<dbReference type="PathwayCommons" id="Q9UQD0"/>
<dbReference type="Reactome" id="R-HSA-445095">
    <property type="pathway name" value="Interaction between L1 and Ankyrins"/>
</dbReference>
<dbReference type="Reactome" id="R-HSA-5576892">
    <property type="pathway name" value="Phase 0 - rapid depolarisation"/>
</dbReference>
<dbReference type="SignaLink" id="Q9UQD0"/>
<dbReference type="SIGNOR" id="Q9UQD0"/>
<dbReference type="BioGRID-ORCS" id="6334">
    <property type="hits" value="13 hits in 1149 CRISPR screens"/>
</dbReference>
<dbReference type="ChiTaRS" id="SCN8A">
    <property type="organism name" value="human"/>
</dbReference>
<dbReference type="GeneWiki" id="SCN8A"/>
<dbReference type="GenomeRNAi" id="6334"/>
<dbReference type="Pharos" id="Q9UQD0">
    <property type="development level" value="Tclin"/>
</dbReference>
<dbReference type="PRO" id="PR:Q9UQD0"/>
<dbReference type="Proteomes" id="UP000005640">
    <property type="component" value="Chromosome 12"/>
</dbReference>
<dbReference type="RNAct" id="Q9UQD0">
    <property type="molecule type" value="protein"/>
</dbReference>
<dbReference type="Bgee" id="ENSG00000196876">
    <property type="expression patterns" value="Expressed in Brodmann (1909) area 23 and 149 other cell types or tissues"/>
</dbReference>
<dbReference type="ExpressionAtlas" id="Q9UQD0">
    <property type="expression patterns" value="baseline and differential"/>
</dbReference>
<dbReference type="GO" id="GO:0070161">
    <property type="term" value="C:anchoring junction"/>
    <property type="evidence" value="ECO:0007669"/>
    <property type="project" value="UniProtKB-KW"/>
</dbReference>
<dbReference type="GO" id="GO:0030424">
    <property type="term" value="C:axon"/>
    <property type="evidence" value="ECO:0000250"/>
    <property type="project" value="ARUK-UCL"/>
</dbReference>
<dbReference type="GO" id="GO:0043194">
    <property type="term" value="C:axon initial segment"/>
    <property type="evidence" value="ECO:0000250"/>
    <property type="project" value="BHF-UCL"/>
</dbReference>
<dbReference type="GO" id="GO:0030054">
    <property type="term" value="C:cell junction"/>
    <property type="evidence" value="ECO:0000314"/>
    <property type="project" value="HPA"/>
</dbReference>
<dbReference type="GO" id="GO:0031410">
    <property type="term" value="C:cytoplasmic vesicle"/>
    <property type="evidence" value="ECO:0007669"/>
    <property type="project" value="UniProtKB-KW"/>
</dbReference>
<dbReference type="GO" id="GO:0016020">
    <property type="term" value="C:membrane"/>
    <property type="evidence" value="ECO:0000304"/>
    <property type="project" value="ProtInc"/>
</dbReference>
<dbReference type="GO" id="GO:0033268">
    <property type="term" value="C:node of Ranvier"/>
    <property type="evidence" value="ECO:0000250"/>
    <property type="project" value="BHF-UCL"/>
</dbReference>
<dbReference type="GO" id="GO:0005886">
    <property type="term" value="C:plasma membrane"/>
    <property type="evidence" value="ECO:0000314"/>
    <property type="project" value="HPA"/>
</dbReference>
<dbReference type="GO" id="GO:0002102">
    <property type="term" value="C:podosome"/>
    <property type="evidence" value="ECO:0007669"/>
    <property type="project" value="UniProtKB-SubCell"/>
</dbReference>
<dbReference type="GO" id="GO:0001518">
    <property type="term" value="C:voltage-gated sodium channel complex"/>
    <property type="evidence" value="ECO:0000314"/>
    <property type="project" value="UniProtKB"/>
</dbReference>
<dbReference type="GO" id="GO:0030018">
    <property type="term" value="C:Z disc"/>
    <property type="evidence" value="ECO:0000250"/>
    <property type="project" value="BHF-UCL"/>
</dbReference>
<dbReference type="GO" id="GO:0031402">
    <property type="term" value="F:sodium ion binding"/>
    <property type="evidence" value="ECO:0000314"/>
    <property type="project" value="UniProtKB"/>
</dbReference>
<dbReference type="GO" id="GO:0005248">
    <property type="term" value="F:voltage-gated sodium channel activity"/>
    <property type="evidence" value="ECO:0000314"/>
    <property type="project" value="UniProtKB"/>
</dbReference>
<dbReference type="GO" id="GO:0001508">
    <property type="term" value="P:action potential"/>
    <property type="evidence" value="ECO:0000314"/>
    <property type="project" value="UniProtKB"/>
</dbReference>
<dbReference type="GO" id="GO:0086002">
    <property type="term" value="P:cardiac muscle cell action potential involved in contraction"/>
    <property type="evidence" value="ECO:0000318"/>
    <property type="project" value="GO_Central"/>
</dbReference>
<dbReference type="GO" id="GO:0042552">
    <property type="term" value="P:myelination"/>
    <property type="evidence" value="ECO:0000250"/>
    <property type="project" value="BHF-UCL"/>
</dbReference>
<dbReference type="GO" id="GO:0007422">
    <property type="term" value="P:peripheral nervous system development"/>
    <property type="evidence" value="ECO:0000250"/>
    <property type="project" value="BHF-UCL"/>
</dbReference>
<dbReference type="GO" id="GO:0035725">
    <property type="term" value="P:sodium ion transmembrane transport"/>
    <property type="evidence" value="ECO:0000318"/>
    <property type="project" value="GO_Central"/>
</dbReference>
<dbReference type="GO" id="GO:0006814">
    <property type="term" value="P:sodium ion transport"/>
    <property type="evidence" value="ECO:0000303"/>
    <property type="project" value="UniProtKB"/>
</dbReference>
<dbReference type="CDD" id="cd13433">
    <property type="entry name" value="Na_channel_gate"/>
    <property type="match status" value="1"/>
</dbReference>
<dbReference type="FunFam" id="1.10.238.10:FF:000002">
    <property type="entry name" value="Sodium channel protein"/>
    <property type="match status" value="1"/>
</dbReference>
<dbReference type="FunFam" id="1.10.287.70:FF:000001">
    <property type="entry name" value="Sodium channel protein"/>
    <property type="match status" value="1"/>
</dbReference>
<dbReference type="FunFam" id="1.10.287.70:FF:000006">
    <property type="entry name" value="Sodium channel protein"/>
    <property type="match status" value="1"/>
</dbReference>
<dbReference type="FunFam" id="1.20.120.350:FF:000002">
    <property type="entry name" value="Sodium channel protein"/>
    <property type="match status" value="1"/>
</dbReference>
<dbReference type="FunFam" id="1.20.120.350:FF:000004">
    <property type="entry name" value="Sodium channel protein"/>
    <property type="match status" value="1"/>
</dbReference>
<dbReference type="FunFam" id="1.20.120.350:FF:000005">
    <property type="entry name" value="Sodium channel protein"/>
    <property type="match status" value="1"/>
</dbReference>
<dbReference type="FunFam" id="1.20.5.1190:FF:000003">
    <property type="entry name" value="Sodium channel protein"/>
    <property type="match status" value="1"/>
</dbReference>
<dbReference type="FunFam" id="1.20.120.350:FF:000003">
    <property type="entry name" value="Voltage-dependent sodium channel"/>
    <property type="match status" value="1"/>
</dbReference>
<dbReference type="Gene3D" id="1.10.287.70">
    <property type="match status" value="4"/>
</dbReference>
<dbReference type="Gene3D" id="1.10.238.10">
    <property type="entry name" value="EF-hand"/>
    <property type="match status" value="1"/>
</dbReference>
<dbReference type="Gene3D" id="1.20.5.1190">
    <property type="entry name" value="iswi atpase"/>
    <property type="match status" value="1"/>
</dbReference>
<dbReference type="Gene3D" id="1.20.120.350">
    <property type="entry name" value="Voltage-gated potassium channels. Chain C"/>
    <property type="match status" value="4"/>
</dbReference>
<dbReference type="InterPro" id="IPR005821">
    <property type="entry name" value="Ion_trans_dom"/>
</dbReference>
<dbReference type="InterPro" id="IPR000048">
    <property type="entry name" value="IQ_motif_EF-hand-BS"/>
</dbReference>
<dbReference type="InterPro" id="IPR008054">
    <property type="entry name" value="Na_channel_a8su"/>
</dbReference>
<dbReference type="InterPro" id="IPR001696">
    <property type="entry name" value="Na_channel_asu"/>
</dbReference>
<dbReference type="InterPro" id="IPR044564">
    <property type="entry name" value="Na_chnl_inactivation_gate"/>
</dbReference>
<dbReference type="InterPro" id="IPR010526">
    <property type="entry name" value="Na_trans_assoc_dom"/>
</dbReference>
<dbReference type="InterPro" id="IPR024583">
    <property type="entry name" value="Na_trans_cytopl"/>
</dbReference>
<dbReference type="InterPro" id="IPR043203">
    <property type="entry name" value="VGCC_Ca_Na"/>
</dbReference>
<dbReference type="InterPro" id="IPR027359">
    <property type="entry name" value="Volt_channel_dom_sf"/>
</dbReference>
<dbReference type="PANTHER" id="PTHR10037:SF23">
    <property type="entry name" value="SODIUM CHANNEL PROTEIN TYPE 8 SUBUNIT ALPHA"/>
    <property type="match status" value="1"/>
</dbReference>
<dbReference type="PANTHER" id="PTHR10037">
    <property type="entry name" value="VOLTAGE-GATED CATION CHANNEL CALCIUM AND SODIUM"/>
    <property type="match status" value="1"/>
</dbReference>
<dbReference type="Pfam" id="PF00520">
    <property type="entry name" value="Ion_trans"/>
    <property type="match status" value="4"/>
</dbReference>
<dbReference type="Pfam" id="PF24609">
    <property type="entry name" value="IQ_SCN5A_C"/>
    <property type="match status" value="1"/>
</dbReference>
<dbReference type="Pfam" id="PF06512">
    <property type="entry name" value="Na_trans_assoc"/>
    <property type="match status" value="1"/>
</dbReference>
<dbReference type="Pfam" id="PF11933">
    <property type="entry name" value="Na_trans_cytopl"/>
    <property type="match status" value="1"/>
</dbReference>
<dbReference type="PRINTS" id="PR00170">
    <property type="entry name" value="NACHANNEL"/>
</dbReference>
<dbReference type="PRINTS" id="PR01667">
    <property type="entry name" value="NACHANNEL8"/>
</dbReference>
<dbReference type="SMART" id="SM00015">
    <property type="entry name" value="IQ"/>
    <property type="match status" value="1"/>
</dbReference>
<dbReference type="SUPFAM" id="SSF81324">
    <property type="entry name" value="Voltage-gated potassium channels"/>
    <property type="match status" value="4"/>
</dbReference>
<dbReference type="PROSITE" id="PS50096">
    <property type="entry name" value="IQ"/>
    <property type="match status" value="1"/>
</dbReference>
<sequence length="1980" mass="225280">MAARLLAPPGPDSFKPFTPESLANIERRIAESKLKKPPKADGSHREDDEDSKPKPNSDLEAGKSLPFIYGDIPQGLVAVPLEDFDPYYLTQKTFVVLNRGKTLFRFSATPALYILSPFNLIRRIAIKILIHSVFSMIIMCTILTNCVFMTFSNPPDWSKNVEYTFTGIYTFESLVKIIARGFCIDGFTFLRDPWNWLDFSVIMMAYITEFVNLGNVSALRTFRVLRALKTISVIPGLKTIVGALIQSVKKLSDVMILTVFCLSVFALIGLQLFMGNLRNKCVVWPINFNESYLENGTKGFDWEEYINNKTNFYTVPGMLEPLLCGNSSDAGQCPEGYQCMKAGRNPNYGYTSFDTFSWAFLALFRLMTQDYWENLYQLTLRAAGKTYMIFFVLVIFVGSFYLVNLILAVVAMAYEEQNQATLEEAEQKEAEFKAMLEQLKKQQEEAQAAAMATSAGTVSEDAIEEEGEEGGGSPRSSSEISKLSSKSAKERRNRRKKRKQKELSEGEEKGDPEKVFKSESEDGMRRKAFRLPDNRIGRKFSIMNQSLLSIPGSPFLSRHNSKSSIFSFRGPGRFRDPGSENEFADDEHSTVEESEGRRDSLFIPIRARERRSSYSGYSGYSQGSRSSRIFPSLRRSVKRNSTVDCNGVVSLIGGPGSHIGGRLLPEATTEVEIKKKGPGSLLVSMDQLASYGRKDRINSIMSVVTNTLVEELEESQRKCPPCWYKFANTFLIWECHPYWIKLKEIVNLIVMDPFVDLAITICIVLNTLFMAMEHHPMTPQFEHVLAVGNLVFTGIFTAEMFLKLIAMDPYYYFQEGWNIFDGFIVSLSLMELSLADVEGLSVLRSFRLLRVFKLAKSWPTLNMLIKIIGNSVGALGNLTLVLAIIVFIFAVVGMQLFGKSYKECVCKINQDCELPRWHMHDFFHSFLIVFRVLCGEWIETMWDCMEVAGQAMCLIVFMMVMVIGNLVVLNLFLALLLSSFSADNLAATDDDGEMNNLQISVIRIKKGVAWTKLKVHAFMQAHFKQREADEVKPLDELYEKKANCIANHTGADIHRNGDFQKNGNGTTSGIGSSVEKYIIDEDHMSFINNPNLTVRVPIAVGESDFENLNTEDVSSESDPEGSKDKLDDTSSSEGSTIDIKPEVEEVPVEQPEEYLDPDACFTEGCVQRFKCCQVNIEEGLGKSWWILRKTCFLIVEHNWFETFIIFMILLSSGALAFEDIYIEQRKTIRTILEYADKVFTYIFILEMLLKWTAYGFVKFFTNAWCWLDFLIVAVSLVSLIANALGYSELGAIKSLRTLRALRPLRALSRFEGMRVVVNALVGAIPSIMNVLLVCLIFWLIFSIMGVNLFAGKYHYCFNETSEIRFEIEDVNNKTECEKLMEGNNTEIRWKNVKINFDNVGAGYLALLQVATFKGWMDIMYAAVDSRKPDEQPKYEDNIYMYIYFVIFIIFGSFFTLNLFIGVIIDNFNQQKKKFGGQDIFMTEEQKKYYNAMKKLGSKKPQKPIPRPLNKIQGIVFDFVTQQAFDIVIMMLICLNMVTMMVETDTQSKQMENILYWINLVFVIFFTCECVLKMFALRHYYFTIGWNIFDFVVVILSIVGMFLADIIEKYFVSPTLFRVIRLARIGRILRLIKGAKGIRTLLFALMMSLPALFNIGLLLFLVMFIFSIFGMSNFAYVKHEAGIDDMFNFETFGNSMICLFQITTSAGWDGLLLPILNRPPDCSLDKEHPGSGFKGDCGNPSVGIFFFVSYIIISFLIVVNMYIAIILENFSVATEESADPLSEDDFETFYEIWEKFDPDATQFIEYCKLADFADALEHPLRVPKPNTIELIAMDLPMVSGDRIHCLDILFAFTKRVLGDSGELDILRQQMEERFVASNPSKVSYEPITTTLRRKQEEVSAVVLQRAYRGHLARRGFICKKTTSNKLENGGTHREKKESTPSTASLPSYDSVTKPEKEKQQRAEEGRRERAKRQKEVRESKC</sequence>
<comment type="function">
    <text evidence="17 19 21 25 32 33 34 35">Pore-forming subunit of a voltage-gated sodium channel complex assuming opened or closed conformations in response to the voltage difference across membranes and through which sodium ions selectively pass along their electrochemical gradient (PubMed:24874546, PubMed:25239001, PubMed:25725044, PubMed:26900580, PubMed:29726066, PubMed:33245860, PubMed:36696443, PubMed:36823201). Contributes to neuronal excitability by regulating action potential threshold and propagation (PubMed:24874546, PubMed:25239001, PubMed:25725044, PubMed:26900580, PubMed:29726066, PubMed:33245860, PubMed:36696443, PubMed:36823201).</text>
</comment>
<comment type="function">
    <molecule>Isoform 5</molecule>
    <text evidence="12">More specifically expressed in non-neuronal cells, could play a role in sodium release from intracellular compartments and participate in the control of podosomes formation and macrophages adhesion and movement.</text>
</comment>
<comment type="catalytic activity">
    <reaction evidence="32 34 35">
        <text>Na(+)(in) = Na(+)(out)</text>
        <dbReference type="Rhea" id="RHEA:34963"/>
        <dbReference type="ChEBI" id="CHEBI:29101"/>
    </reaction>
</comment>
<comment type="activity regulation">
    <text evidence="35">Inhibited by tetrodotoxin and, more weakly, by its metabolite 4,9-ah-tetrodotoxin.</text>
</comment>
<comment type="subunit">
    <text evidence="6 10 16 25 29 33 34 35 42">The voltage-sensitive sodium channel consists of an ion-conducting pore-forming alpha subunit regulated by one or more beta-1 (SCN1B), beta-2 (SCN2B), beta-3 (SCN3B) and/or beta-4 (SCN4B) subunits. Beta-1 (SCN1B) and beta-3 (SCN3B) are non-covalently associated with alpha, while beta-2 (SCN2B) and beta-4 (SCN4B) are covalently linked by disulfide bonds (PubMed:36696443, PubMed:36823201). Interacts with NEDD4 and NEDD4L (By similarity). Interacts with FGF13 (PubMed:15282281, PubMed:33245860). Interacts with FGF14, GBG3, GBB2 and SCN1B (PubMed:26900580). Interacts with TMEM233 (PubMed:37117223). Interacts with the conotoxin GVIIJ (PubMed:24497506). Interacts with the spider beta/delta-theraphotoxin-Pre1a (PubMed:28428547). Interacts with CALM1; the interaction modulates the inactivation rate of SCN8A (By similarity).</text>
</comment>
<comment type="interaction">
    <interactant intactId="EBI-2682072">
        <id>Q9UQD0</id>
    </interactant>
    <interactant intactId="EBI-12836320">
        <id>Q92915-2</id>
        <label>FGF14</label>
    </interactant>
    <organismsDiffer>false</organismsDiffer>
    <experiments>3</experiments>
</comment>
<comment type="subcellular location">
    <subcellularLocation>
        <location evidence="32">Cell membrane</location>
        <topology evidence="34 35">Multi-pass membrane protein</topology>
    </subcellularLocation>
    <subcellularLocation>
        <location evidence="6">Cell projection</location>
        <location evidence="6">Axon</location>
    </subcellularLocation>
    <text evidence="6">Mainly localizes to the axon initial segment.</text>
</comment>
<comment type="subcellular location">
    <molecule>Isoform 5</molecule>
    <subcellularLocation>
        <location evidence="12">Cytoplasmic vesicle</location>
    </subcellularLocation>
    <subcellularLocation>
        <location evidence="12">Cell projection</location>
        <location evidence="12">Podosome</location>
    </subcellularLocation>
</comment>
<comment type="alternative products">
    <event type="alternative splicing"/>
    <isoform>
        <id>Q9UQD0-1</id>
        <name evidence="37">1</name>
        <sequence type="displayed"/>
    </isoform>
    <isoform>
        <id>Q9UQD0-2</id>
        <name evidence="37">2</name>
        <name evidence="37">5A</name>
        <sequence type="described" ref="VSP_050589 VSP_050590"/>
    </isoform>
    <isoform>
        <id>Q9UQD0-3</id>
        <name evidence="37">3</name>
        <sequence type="described" ref="VSP_050591"/>
    </isoform>
    <isoform>
        <id>Q9UQD0-4</id>
        <name evidence="36">4</name>
        <name evidence="36">18N</name>
        <sequence type="described" ref="VSP_050592 VSP_050593"/>
    </isoform>
    <isoform>
        <id>Q9UQD0-5</id>
        <name>5</name>
        <name>Delta18</name>
        <sequence type="described" ref="VSP_038651"/>
    </isoform>
</comment>
<comment type="tissue specificity">
    <text evidence="30">Expressed in the hippocampus with increased expression in epileptic tissue compared to normal adjacent tissue (at protein level) (PubMed:28842554).</text>
</comment>
<comment type="tissue specificity">
    <molecule>Isoform 5</molecule>
    <text evidence="12">Expressed in non-neuronal tissues, such as monocytes/macrophages.</text>
</comment>
<comment type="induction">
    <text evidence="30">Up-regulated in the hippocampus after epilepsy.</text>
</comment>
<comment type="domain">
    <text evidence="41">The sequence contains 4 internal repeats, each with 5 hydrophobic segments (S1, S2, S3, S5, S6) and one positively charged segment (S4). Segments S4 are probably the voltage-sensors and are characterized by a series of positively charged amino acids at every third position.</text>
</comment>
<comment type="PTM">
    <text evidence="6">May be ubiquitinated by NEDD4L; which would promote its endocytosis.</text>
</comment>
<comment type="PTM">
    <text evidence="1">Phosphorylation at Ser-1497 by PKC in a highly conserved cytoplasmic loop slows inactivation of the sodium channel and reduces peak sodium currents.</text>
</comment>
<comment type="disease" evidence="11">
    <disease id="DI-03296">
        <name>Cognitive impairment with or without cerebellar ataxia</name>
        <acronym>CIAT</acronym>
        <description>A disorder characterized by markedly delayed cognitive and motor development, attention deficit disorder, and cerebellar ataxia. Features include bilateral esophoria, strabismatic amblyopia, unsustained gaze evoked nystagmus on horizontal gaze, ataxic gait, dysmetria in the upper limbs and dysarthria, with normal strength, tone, and reflexes.</description>
        <dbReference type="MIM" id="614306"/>
    </disease>
    <text>The disease is caused by variants affecting the gene represented in this entry.</text>
</comment>
<comment type="disease" evidence="13 14 15 17 18 19 20 21 22 23 25 26 27 28 31">
    <disease id="DI-03398">
        <name>Developmental and epileptic encephalopathy 13</name>
        <acronym>DEE13</acronym>
        <description>A form of epilepsy characterized by frequent tonic seizures or spasms beginning in infancy with a specific EEG finding of suppression-burst patterns, characterized by high-voltage bursts alternating with almost flat suppression phases. Patients may progress to West syndrome, which is characterized by tonic spasms with clustering, arrest of psychomotor development, and hypsarrhythmia on EEG. DEE13 is a severe form consisting of early-onset seizures, features of autism, intellectual disability, ataxia, and sudden unexplained death in epilepsy.</description>
        <dbReference type="MIM" id="614558"/>
    </disease>
    <text>The disease is caused by variants affecting the gene represented in this entry.</text>
</comment>
<comment type="disease" evidence="24 27">
    <disease id="DI-04807">
        <name>Seizures, benign familial infantile, 5</name>
        <acronym>BFIS5</acronym>
        <description>A form of benign familial infantile epilepsy, a neurologic disorder characterized by afebrile seizures occurring in clusters during the first year of life, without neurologic sequelae. BFIS5 inheritance is autosomal dominant.</description>
        <dbReference type="MIM" id="617080"/>
    </disease>
    <text>The disease is caused by variants affecting the gene represented in this entry.</text>
</comment>
<comment type="disease" evidence="32">
    <disease id="DI-05513">
        <name>Myoclonus, familial, 2</name>
        <acronym>MYOCL2</acronym>
        <description>An autosomal dominant neurologic disorder characterized by upper limb isolated myoclonus without seizures or cognitive impairment. MYOCL2 is a non-progressive disease with onset in the first decade of life.</description>
        <dbReference type="MIM" id="618364"/>
    </disease>
    <text>The disease may be caused by variants affecting the gene represented in this entry.</text>
</comment>
<comment type="similarity">
    <text evidence="41">Belongs to the sodium channel (TC 1.A.1.10) family. Nav1.6/SCN8A subfamily.</text>
</comment>